<gene>
    <name evidence="78 84" type="primary">HDAC1</name>
    <name evidence="79" type="synonym">RPD3L1</name>
</gene>
<reference key="1">
    <citation type="journal article" date="1996" name="Science">
        <title>A mammalian histone deacetylase related to the yeast transcriptional regulator Rpd3p.</title>
        <authorList>
            <person name="Taunton J."/>
            <person name="Hassig C.A."/>
            <person name="Schreiber S.L."/>
        </authorList>
    </citation>
    <scope>NUCLEOTIDE SEQUENCE [MRNA]</scope>
    <source>
        <tissue>T-cell</tissue>
    </source>
</reference>
<reference key="2">
    <citation type="journal article" date="1996" name="Cytogenet. Cell Genet.">
        <title>Isolation and mapping of a human gene (RPD3L1) that is homologous to RPD3, a transcription factor in Saccharomyces cerevisiae.</title>
        <authorList>
            <person name="Furukawa Y."/>
            <person name="Kawakami T."/>
            <person name="Sudo K."/>
            <person name="Inazawa J."/>
            <person name="Matsumine A."/>
            <person name="Akiyama T."/>
            <person name="Nakamura Y."/>
        </authorList>
    </citation>
    <scope>NUCLEOTIDE SEQUENCE [MRNA]</scope>
    <source>
        <tissue>Fetal lung</tissue>
    </source>
</reference>
<reference key="3">
    <citation type="journal article" date="2004" name="Genome Res.">
        <title>The status, quality, and expansion of the NIH full-length cDNA project: the Mammalian Gene Collection (MGC).</title>
        <authorList>
            <consortium name="The MGC Project Team"/>
        </authorList>
    </citation>
    <scope>NUCLEOTIDE SEQUENCE [LARGE SCALE MRNA]</scope>
    <source>
        <tissue>Lung</tissue>
    </source>
</reference>
<reference key="4">
    <citation type="journal article" date="1999" name="EMBO J.">
        <title>MEF-2 function is modified by a novel co-repressor, MITR.</title>
        <authorList>
            <person name="Sparrow D.B."/>
            <person name="Miska E.A."/>
            <person name="Langley E."/>
            <person name="Reynaud-Deonauth S."/>
            <person name="Kotecha S."/>
            <person name="Towers N."/>
            <person name="Spohr G."/>
            <person name="Kouzarides T."/>
            <person name="Mohun T.J."/>
        </authorList>
    </citation>
    <scope>INTERACTION WITH HDAC9</scope>
</reference>
<reference key="5">
    <citation type="journal article" date="2000" name="Genes Dev.">
        <title>BCoR, a novel corepressor involved in BCL-6 repression.</title>
        <authorList>
            <person name="Huynh K.D."/>
            <person name="Fischle W."/>
            <person name="Verdin E."/>
            <person name="Bardwell V.J."/>
        </authorList>
    </citation>
    <scope>INTERACTION WITH BCOR</scope>
</reference>
<reference key="6">
    <citation type="journal article" date="2000" name="J. Biol. Chem.">
        <title>HDAC1, a histone deacetylase, forms a complex with Hus1 and Rad9, two G2/M checkpoint Rad proteins.</title>
        <authorList>
            <person name="Cai R.L."/>
            <person name="Yan-Neale Y."/>
            <person name="Cueto M.A."/>
            <person name="Xu H."/>
            <person name="Cohen D."/>
        </authorList>
    </citation>
    <scope>INTERACTION WITH THE 9-1-1 COMPLEX AND HUS1</scope>
    <scope>SUBCELLULAR LOCATION</scope>
</reference>
<reference key="7">
    <citation type="journal article" date="2000" name="J. Biol. Chem.">
        <title>Receptor-interacting protein 140 directly recruits histone deacetylases for gene silencing.</title>
        <authorList>
            <person name="Wei L.-N."/>
            <person name="Hu X."/>
            <person name="Chandra D."/>
            <person name="Seto E."/>
            <person name="Farooqui M."/>
        </authorList>
    </citation>
    <scope>INTERACTION WITH NRIP1</scope>
</reference>
<reference key="8">
    <citation type="journal article" date="2000" name="Mol. Cell. Biol.">
        <title>Sequestration and inhibition of Daxx-mediated transcriptional repression by PML.</title>
        <authorList>
            <person name="Li H."/>
            <person name="Leo C."/>
            <person name="Zhu J."/>
            <person name="Wu X."/>
            <person name="O'Neil J."/>
            <person name="Park E.-J."/>
            <person name="Chen J.D."/>
        </authorList>
    </citation>
    <scope>INTERACTION WITH DAXX</scope>
</reference>
<reference key="9">
    <citation type="journal article" date="2000" name="Proc. Natl. Acad. Sci. U.S.A.">
        <title>Identification of a transcriptional repressor related to the noncatalytic domain of histone deacetylases 4 and 5.</title>
        <authorList>
            <person name="Zhou X."/>
            <person name="Richon V.M."/>
            <person name="Rifkind R.A."/>
            <person name="Marks P.A."/>
        </authorList>
    </citation>
    <scope>INTERACTION WITH HDAC9</scope>
</reference>
<reference key="10">
    <citation type="journal article" date="2000" name="Trends Genet.">
        <title>NuRD and SIN3 histone deacetylase complexes in development.</title>
        <authorList>
            <person name="Ahringer J."/>
        </authorList>
    </citation>
    <scope>REVIEW ON DEACETYLASE COMPLEXES</scope>
</reference>
<reference key="11">
    <citation type="journal article" date="2001" name="J. Biol. Chem.">
        <title>Histone deacetylase 1 phosphorylation promotes enzymatic activity and complex formation.</title>
        <authorList>
            <person name="Pflum M.K.H."/>
            <person name="Tong J.K."/>
            <person name="Lane W.S."/>
            <person name="Schreiber S.L."/>
        </authorList>
    </citation>
    <scope>PHOSPHORYLATION AT SER-421 AND SER-423</scope>
    <scope>MUTAGENESIS OF SER-421; SER-423; GLU-424; GLU-425 AND GLU-426</scope>
    <scope>IDENTIFICATION BY MASS SPECTROMETRY</scope>
</reference>
<reference key="12">
    <citation type="journal article" date="2001" name="Genes Dev.">
        <title>Sharp, an inducible cofactor that integrates nuclear receptor repression and activation.</title>
        <authorList>
            <person name="Shi Y."/>
            <person name="Downes M."/>
            <person name="Xie W."/>
            <person name="Kao H.-Y."/>
            <person name="Ordentlich P."/>
            <person name="Tsai C.-C."/>
            <person name="Hon M."/>
            <person name="Evans R.M."/>
        </authorList>
    </citation>
    <scope>INTERACTION WITH SPEN</scope>
</reference>
<reference key="13">
    <citation type="journal article" date="2001" name="J. Biol. Chem.">
        <title>Stable histone deacetylase complexes distinguished by the presence of SANT domain proteins CoREST/kiaa0071 and Mta-L1.</title>
        <authorList>
            <person name="Humphrey G.W."/>
            <person name="Wang Y."/>
            <person name="Russanova V.R."/>
            <person name="Hirai T."/>
            <person name="Qin J."/>
            <person name="Nakatani Y."/>
            <person name="Howard B.H."/>
        </authorList>
    </citation>
    <scope>INTERACTION WITH MBD2 AND MBD3</scope>
</reference>
<reference key="14">
    <citation type="journal article" date="2001" name="J. Biol. Chem.">
        <title>TGIF2 interacts with histone deacetylase 1 and represses transcription.</title>
        <authorList>
            <person name="Melhuish T.A."/>
            <person name="Gallo C.M."/>
            <person name="Wotton D."/>
        </authorList>
    </citation>
    <scope>INTERACTION WITH TGIF2 AND TGIF</scope>
</reference>
<reference key="15">
    <citation type="journal article" date="2001" name="Mol. Cell. Biol.">
        <title>ETO, a target of t(8;21) in acute leukemia, makes distinct contacts with multiple histone deacetylases and binds mSin3A through its oligomerization domain.</title>
        <authorList>
            <person name="Amann J.M."/>
            <person name="Nip J."/>
            <person name="Strom D.K."/>
            <person name="Lutterbach B."/>
            <person name="Harada H."/>
            <person name="Lenny N."/>
            <person name="Downing J.R."/>
            <person name="Meyers S."/>
            <person name="Hiebert S.W."/>
        </authorList>
    </citation>
    <scope>INTERACTION WITH CBFA2T3</scope>
</reference>
<reference key="16">
    <citation type="journal article" date="2002" name="EMBO J.">
        <title>The SUMO E3 ligase RanBP2 promotes modification of the HDAC4 deacetylase.</title>
        <authorList>
            <person name="Kirsh O."/>
            <person name="Seeler J.-S."/>
            <person name="Pichler A."/>
            <person name="Gast A."/>
            <person name="Mueller S."/>
            <person name="Miska E."/>
            <person name="Mathieu M."/>
            <person name="Harel-Bellan A."/>
            <person name="Kouzarides T."/>
            <person name="Melchior F."/>
            <person name="Dejean A."/>
        </authorList>
    </citation>
    <scope>SUMOYLATION</scope>
</reference>
<reference key="17">
    <citation type="journal article" date="2002" name="J. Biol. Chem.">
        <title>SUMO-1 modification of histone deacetylase 1 (HDAC1) modulates its biological activities.</title>
        <authorList>
            <person name="David G."/>
            <person name="Neptune M.A."/>
            <person name="DePinho R.A."/>
        </authorList>
    </citation>
    <scope>SUMOYLATION AT LYS-444 AND LYS-476</scope>
</reference>
<reference key="18">
    <citation type="journal article" date="2003" name="EMBO J.">
        <title>Role of acetylated human AP-endonuclease (APE1/Ref-1) in regulation of the parathyroid hormone gene.</title>
        <authorList>
            <person name="Bhakat K.K."/>
            <person name="Izumi T."/>
            <person name="Yang S.H."/>
            <person name="Hazra T.K."/>
            <person name="Mitra S."/>
        </authorList>
    </citation>
    <scope>INTERACTION WITH APEX1</scope>
</reference>
<reference key="19">
    <citation type="journal article" date="2003" name="Genes Dev.">
        <title>Human Sin3 deacetylase and trithorax-related Set1/Ash2 histone H3-K4 methyltransferase are tethered together selectively by the cell-proliferation factor HCF-1.</title>
        <authorList>
            <person name="Wysocka J."/>
            <person name="Myers M.P."/>
            <person name="Laherty C.D."/>
            <person name="Eisenman R.N."/>
            <person name="Herr W."/>
        </authorList>
    </citation>
    <scope>INTERACTION WITH HCFC1</scope>
</reference>
<reference key="20">
    <citation type="journal article" date="2003" name="J. Biol. Chem.">
        <title>A candidate X-linked mental retardation gene is a component of a new family of histone deacetylase-containing complexes.</title>
        <authorList>
            <person name="Hakimi M.-A."/>
            <person name="Dong Y."/>
            <person name="Lane W.S."/>
            <person name="Speicher D.W."/>
            <person name="Shiekhattar R."/>
        </authorList>
    </citation>
    <scope>IDENTIFICATION BY MASS SPECTROMETRY</scope>
    <scope>IDENTIFICATION IN THE BHC COMPLEX WITH GSE1; GTF2I; HDAC2; HMG20B; KDM1A; PHF21A; RCOR1; ZMYM2; ZMYM3 AND ZNF217</scope>
</reference>
<reference key="21">
    <citation type="journal article" date="2003" name="J. Biol. Chem.">
        <title>Acetylated SP3 is a transcriptional activator.</title>
        <authorList>
            <person name="Ammanamanchi S."/>
            <person name="Freeman J.W."/>
            <person name="Brattain M.G."/>
        </authorList>
    </citation>
    <scope>INTERACTION WITH SP3</scope>
    <scope>FUNCTION</scope>
</reference>
<reference key="22">
    <citation type="journal article" date="2003" name="Mol. Cell. Biol.">
        <title>Human MI-ER1 alpha and beta function as transcriptional repressors by recruitment of histone deacetylase 1 to their conserved ELM2 domain.</title>
        <authorList>
            <person name="Ding Z."/>
            <person name="Gillespie L.L."/>
            <person name="Paterno G.D."/>
        </authorList>
    </citation>
    <scope>INTERACTION WITH MIER1</scope>
</reference>
<reference key="23">
    <citation type="journal article" date="2003" name="Mol. Cell. Biol.">
        <title>Identification and characterization of three new components of the mSin3A corepressor complex.</title>
        <authorList>
            <person name="Fleischer T.C."/>
            <person name="Yun U.J."/>
            <person name="Ayer D.E."/>
        </authorList>
    </citation>
    <scope>IDENTIFICATION IN A MSIN3A COREPRESSOR COMPLEX WITH SIN3A; SAP130; SUDS3; ARID4B; HDAC1 AND HDAC2</scope>
</reference>
<reference key="24">
    <citation type="journal article" date="2003" name="Oncogene">
        <title>Modulation of p120E4F transcriptional activity by the Gam1 adenoviral early protein.</title>
        <authorList>
            <person name="Colombo R."/>
            <person name="Draetta G.F."/>
            <person name="Chiocca S."/>
        </authorList>
    </citation>
    <scope>INTERACTION WITH E4F1</scope>
</reference>
<reference key="25">
    <citation type="journal article" date="2004" name="Biochem. Biophys. Res. Commun.">
        <title>Identification of a novel BRMS1-homologue protein p40 as a component of the mSin3A/p33(ING1b)/HDAC1 deacetylase complex.</title>
        <authorList>
            <person name="Nikolaev A.Y."/>
            <person name="Papanikolaou N.A."/>
            <person name="Li M."/>
            <person name="Qin J."/>
            <person name="Gu W."/>
        </authorList>
    </citation>
    <scope>INTERACTION WITH BRMS1L</scope>
</reference>
<reference key="26">
    <citation type="journal article" date="2004" name="Cell">
        <title>MTA3 and the Mi-2/NuRD complex regulate cell fate during B lymphocyte differentiation.</title>
        <authorList>
            <person name="Fujita N."/>
            <person name="Jaye D.L."/>
            <person name="Geigerman C."/>
            <person name="Akyildiz A."/>
            <person name="Mooney M.R."/>
            <person name="Boss J.M."/>
            <person name="Wade P.A."/>
        </authorList>
    </citation>
    <scope>INTERACTION WITH BCL6</scope>
    <scope>IDENTIFICATION IN THE NURD COMPLEX</scope>
</reference>
<reference key="27">
    <citation type="journal article" date="2004" name="J. Biol. Chem.">
        <title>Site-specific acetylation of the fetal globin activator NF-E4 prevents its ubiquitination and regulates its interaction with the histone deacetylase, HDAC1.</title>
        <authorList>
            <person name="Zhao Q."/>
            <person name="Cumming H."/>
            <person name="Cerruti L."/>
            <person name="Cunningham J.M."/>
            <person name="Jane S.M."/>
        </authorList>
    </citation>
    <scope>INTERACTION WITH NFE4</scope>
</reference>
<reference key="28">
    <citation type="journal article" date="2004" name="Mol. Cell. Biol.">
        <title>SENP1 enhances androgen receptor-dependent transcription through desumoylation of histone deacetylase 1.</title>
        <authorList>
            <person name="Cheng J."/>
            <person name="Wang D."/>
            <person name="Wang Z."/>
            <person name="Yeh E.T.H."/>
        </authorList>
    </citation>
    <scope>DESUMOYLATION BY SENP1</scope>
</reference>
<reference key="29">
    <citation type="journal article" date="2004" name="Oncogene">
        <title>ICBP90, an E2F-1 target, recruits HDAC1 and binds to methyl-CpG through its SRA domain.</title>
        <authorList>
            <person name="Unoki M."/>
            <person name="Nishidate T."/>
            <person name="Nakamura Y."/>
        </authorList>
    </citation>
    <scope>INTERACTION WITH UHRF1 AND UHRF2</scope>
</reference>
<reference key="30">
    <citation type="journal article" date="2005" name="Gastroenterology">
        <title>STAT3 NH2-terminal acetylation is activated by the hepatic acute-phase response and required for IL-6 induction of angiotensinogen.</title>
        <authorList>
            <person name="Ray S."/>
            <person name="Boldogh I."/>
            <person name="Brasier A.R."/>
        </authorList>
    </citation>
    <scope>FUNCTION</scope>
    <scope>CATALYTIC ACTIVITY</scope>
</reference>
<reference key="31">
    <citation type="journal article" date="2005" name="J. Biol. Chem.">
        <title>MBD3L2 interacts with MBD3 and components of the NuRD complex and can oppose MBD2-MeCP1-mediated methylation silencing.</title>
        <authorList>
            <person name="Jin S.-G."/>
            <person name="Jiang C.-L."/>
            <person name="Rauch T."/>
            <person name="Li H."/>
            <person name="Pfeifer G.P."/>
        </authorList>
    </citation>
    <scope>INTERACTION WITH MBD3L2</scope>
</reference>
<reference key="32">
    <citation type="journal article" date="2005" name="J. Biol. Chem.">
        <title>Functional characterization of JMJD2A, a histone deacetylase- and retinoblastoma-binding protein.</title>
        <authorList>
            <person name="Gray S.G."/>
            <person name="Iglesias A.H."/>
            <person name="Lizcano F."/>
            <person name="Villanueva R."/>
            <person name="Camelo S."/>
            <person name="Jingu H."/>
            <person name="Teh B.T."/>
            <person name="Koibuchi N."/>
            <person name="Chin W.W."/>
            <person name="Kokkotou E."/>
            <person name="Dangond F."/>
        </authorList>
    </citation>
    <scope>INTERACTION WITH KDM4A</scope>
</reference>
<reference key="33">
    <citation type="journal article" date="2005" name="Mol. Cell. Biol.">
        <title>Tumor suppressor SMAR1 mediates cyclin D1 repression by recruitment of the SIN3/histone deacetylase 1 complex.</title>
        <authorList>
            <person name="Rampalli S."/>
            <person name="Pavithra L."/>
            <person name="Bhatt A."/>
            <person name="Kundu T.K."/>
            <person name="Chattopadhyay S."/>
        </authorList>
    </citation>
    <scope>INTERACTION WITH BANP</scope>
</reference>
<reference key="34">
    <citation type="journal article" date="2006" name="Biochem. J.">
        <title>INSM1 functions as a transcriptional repressor of the neuroD/beta2 gene through the recruitment of cyclin D1 and histone deacetylases.</title>
        <authorList>
            <person name="Liu W.D."/>
            <person name="Wang H.W."/>
            <person name="Muguira M."/>
            <person name="Breslin M.B."/>
            <person name="Lan M.S."/>
        </authorList>
    </citation>
    <scope>INTERACTION WITH INSM1</scope>
</reference>
<reference key="35">
    <citation type="journal article" date="2006" name="Cell">
        <title>Global, in vivo, and site-specific phosphorylation dynamics in signaling networks.</title>
        <authorList>
            <person name="Olsen J.V."/>
            <person name="Blagoev B."/>
            <person name="Gnad F."/>
            <person name="Macek B."/>
            <person name="Kumar C."/>
            <person name="Mortensen P."/>
            <person name="Mann M."/>
        </authorList>
    </citation>
    <scope>PHOSPHORYLATION [LARGE SCALE ANALYSIS] AT SER-393; SER-421 AND SER-423</scope>
    <scope>IDENTIFICATION BY MASS SPECTROMETRY [LARGE SCALE ANALYSIS]</scope>
    <source>
        <tissue>Cervix carcinoma</tissue>
    </source>
</reference>
<reference key="36">
    <citation type="journal article" date="2006" name="Mol. Cell">
        <title>HDAC1 acetylation is linked to progressive modulation of steroid receptor-induced gene transcription.</title>
        <authorList>
            <person name="Qiu Y."/>
            <person name="Zhao Y."/>
            <person name="Becker M."/>
            <person name="John S."/>
            <person name="Parekh B.S."/>
            <person name="Huang S."/>
            <person name="Hendarwanto A."/>
            <person name="Martinez E.D."/>
            <person name="Chen Y."/>
            <person name="Lu H."/>
            <person name="Adkins N.L."/>
            <person name="Stavreva D.A."/>
            <person name="Wiench M."/>
            <person name="Georgel P.T."/>
            <person name="Schiltz R.L."/>
            <person name="Hager G.L."/>
        </authorList>
    </citation>
    <scope>FUNCTION</scope>
    <scope>CATALYTIC ACTIVITY</scope>
    <scope>INTERACTION WITH EP300</scope>
</reference>
<reference key="37">
    <citation type="journal article" date="2006" name="Mol. Cell. Biol.">
        <title>MBD2/NuRD and MBD3/NuRD, two distinct complexes with different biochemical and functional properties.</title>
        <authorList>
            <person name="Le Guezennec X."/>
            <person name="Vermeulen M."/>
            <person name="Brinkman A.B."/>
            <person name="Hoeijmakers W.A."/>
            <person name="Cohen A."/>
            <person name="Lasonder E."/>
            <person name="Stunnenberg H.G."/>
        </authorList>
    </citation>
    <scope>FUNCTION</scope>
    <scope>IDENTIFICATION IN THE NURD COMPLEX</scope>
    <scope>IDENTIFICATION BY MASS SPECTROMETRY</scope>
</reference>
<reference key="38">
    <citation type="journal article" date="2006" name="Mol. Cell. Biol.">
        <title>Sp1 deacetylation induced by phorbol ester recruits p300 to activate 12(S)-lipoxygenase gene transcription.</title>
        <authorList>
            <person name="Hung J.J."/>
            <person name="Wang Y.T."/>
            <person name="Chang W.C."/>
        </authorList>
    </citation>
    <scope>INTERACTION WITH SP1</scope>
    <scope>FUNCTION</scope>
</reference>
<reference key="39">
    <citation type="journal article" date="2006" name="Mol. Cell. Biol.">
        <title>Breast cancer metastasis suppressor 1 functions as a corepressor by enhancing histone deacetylase 1-mediated deacetylation of RelA/p65 and promoting apoptosis.</title>
        <authorList>
            <person name="Liu Y."/>
            <person name="Smith P.W."/>
            <person name="Jones D.R."/>
        </authorList>
    </citation>
    <scope>FUNCTION</scope>
    <scope>CATALYTIC ACTIVITY</scope>
    <scope>INTERACTION WITH BRMS1</scope>
</reference>
<reference key="40">
    <citation type="journal article" date="2006" name="Nucleic Acids Res.">
        <title>SAP30L interacts with members of the Sin3A corepressor complex and targets Sin3A to the nucleolus.</title>
        <authorList>
            <person name="Viiri K.M."/>
            <person name="Korkeamaeki H."/>
            <person name="Kukkonen M.K."/>
            <person name="Nieminen L.K."/>
            <person name="Lindfors K."/>
            <person name="Peterson P."/>
            <person name="Maeki M."/>
            <person name="Kainulainen H."/>
            <person name="Lohi O."/>
        </authorList>
    </citation>
    <scope>INTERACTION WITH SAP30L</scope>
</reference>
<reference key="41">
    <citation type="journal article" date="2007" name="Biochem. Biophys. Res. Commun.">
        <title>CR/periphilin is a transcriptional co-repressor involved in cell cycle progression.</title>
        <authorList>
            <person name="Kurita M."/>
            <person name="Suzuki H."/>
            <person name="Kawano Y."/>
            <person name="Aiso S."/>
            <person name="Matsuoka M."/>
        </authorList>
    </citation>
    <scope>INTERACTION WITH PPHLN1</scope>
</reference>
<reference key="42">
    <citation type="journal article" date="2007" name="Electrophoresis">
        <title>Toward a global characterization of the phosphoproteome in prostate cancer cells: identification of phosphoproteins in the LNCaP cell line.</title>
        <authorList>
            <person name="Giorgianni F."/>
            <person name="Zhao Y."/>
            <person name="Desiderio D.M."/>
            <person name="Beranova-Giorgianni S."/>
        </authorList>
    </citation>
    <scope>PHOSPHORYLATION [LARGE SCALE ANALYSIS] AT SER-393</scope>
    <scope>IDENTIFICATION BY MASS SPECTROMETRY [LARGE SCALE ANALYSIS]</scope>
    <source>
        <tissue>Prostate cancer</tissue>
    </source>
</reference>
<reference key="43">
    <citation type="journal article" date="2007" name="FASEB J.">
        <title>Mechanisms of ceramide-mediated repression of the human telomerase reverse transcriptase promoter via deacetylation of Sp3 by histone deacetylase 1.</title>
        <authorList>
            <person name="Wooten-Blanks L.G."/>
            <person name="Song P."/>
            <person name="Senkal C.E."/>
            <person name="Ogretmen B."/>
        </authorList>
    </citation>
    <scope>INTERACTION WITH SP3</scope>
</reference>
<reference key="44">
    <citation type="journal article" date="2007" name="Int. J. Cancer">
        <title>Breast cancer associated transcriptional repressor PLU-1/JARID1B interacts directly with histone deacetylases.</title>
        <authorList>
            <person name="Barrett A."/>
            <person name="Santangelo S."/>
            <person name="Tan K."/>
            <person name="Catchpole S."/>
            <person name="Roberts K."/>
            <person name="Spencer-Dene B."/>
            <person name="Hall D."/>
            <person name="Scibetta A."/>
            <person name="Burchell J."/>
            <person name="Verdin E."/>
            <person name="Freemont P."/>
            <person name="Taylor-Papadimitriou J."/>
        </authorList>
    </citation>
    <scope>INTERACTION WITH KDM5B</scope>
</reference>
<reference key="45">
    <citation type="journal article" date="2007" name="J. Biol. Chem.">
        <title>Regulation of E2F1 function by the nuclear corepressor KAP1.</title>
        <authorList>
            <person name="Wang C."/>
            <person name="Rauscher F.J. III"/>
            <person name="Cress W.D."/>
            <person name="Chen J."/>
        </authorList>
    </citation>
    <scope>INTERACTION WITH TRIM28</scope>
    <scope>FUNCTION</scope>
</reference>
<reference key="46">
    <citation type="journal article" date="2007" name="J. Biol. Chem.">
        <title>Critical and functional regulation of CHOP (C/EBP homologous protein) through the N-terminal portion.</title>
        <authorList>
            <person name="Ohoka N."/>
            <person name="Hattori T."/>
            <person name="Kitagawa M."/>
            <person name="Onozaki K."/>
            <person name="Hayashi H."/>
        </authorList>
    </citation>
    <scope>INTERACTION WITH DDIT3</scope>
</reference>
<reference key="47">
    <citation type="journal article" date="2007" name="Nucleic Acids Res.">
        <title>Involvement of chromatin and histone deacetylation in SV40 T antigen transcription regulation.</title>
        <authorList>
            <person name="Valls E."/>
            <person name="Blanco-Garcia N."/>
            <person name="Aquizu N."/>
            <person name="Piedra D."/>
            <person name="Estaras C."/>
            <person name="de la Cruz X."/>
            <person name="Martinez-Balbas M.A."/>
        </authorList>
    </citation>
    <scope>INTERACTION WITH SV40 LARGE T ANTIGEN</scope>
</reference>
<reference key="48">
    <citation type="journal article" date="2007" name="Oncogene">
        <title>SUMO modification of the DEAD box protein p68 modulates its transcriptional activity and promotes its interaction with HDAC1.</title>
        <authorList>
            <person name="Jacobs A.M."/>
            <person name="Nicol S.M."/>
            <person name="Hislop R.G."/>
            <person name="Jaffray E.G."/>
            <person name="Hay R.T."/>
            <person name="Fuller-Pace F.V."/>
        </authorList>
    </citation>
    <scope>INTERACTION WITH DDX5</scope>
</reference>
<reference key="49">
    <citation type="journal article" date="2008" name="Biochim. Biophys. Acta">
        <title>The orphan nuclear receptor Rev-erbbeta recruits Tip60 and HDAC1 to regulate apolipoprotein CIII promoter.</title>
        <authorList>
            <person name="Wang J."/>
            <person name="Liu N."/>
            <person name="Liu Z."/>
            <person name="Li Y."/>
            <person name="Song C."/>
            <person name="Yuan H."/>
            <person name="Li Y.Y."/>
            <person name="Zhao X."/>
            <person name="Lu H."/>
        </authorList>
    </citation>
    <scope>FUNCTION</scope>
    <scope>CATALYTIC ACTIVITY</scope>
    <scope>INTERACTION WITH NR1D2</scope>
</reference>
<reference key="50">
    <citation type="journal article" date="2008" name="Exp. Cell Res.">
        <title>Transcription-dependent nucleolar cap localization and possible nuclear function of DExH RNA helicase RHAU.</title>
        <authorList>
            <person name="Iwamoto F."/>
            <person name="Stadler M."/>
            <person name="Chalupnikova K."/>
            <person name="Oakeley E."/>
            <person name="Nagamine Y."/>
        </authorList>
    </citation>
    <scope>INTERACTION WITH DHX36</scope>
</reference>
<reference key="51">
    <citation type="journal article" date="2008" name="J. Biol. Chem.">
        <title>Nuclear tumor necrosis factor receptor-associated factor 6 in lymphoid cells negatively regulates c-Myb-mediated transactivation through small ubiquitin-related modifier-1 modification.</title>
        <authorList>
            <person name="Pham L.V."/>
            <person name="Zhou H.J."/>
            <person name="Lin-Lee Y.C."/>
            <person name="Tamayo A.T."/>
            <person name="Yoshimura L.C."/>
            <person name="Fu L."/>
            <person name="Darnay B.G."/>
            <person name="Ford R.J."/>
        </authorList>
    </citation>
    <scope>INTERACTION WITH TRAF6</scope>
</reference>
<reference key="52">
    <citation type="journal article" date="2008" name="Mol. Cell">
        <title>Kinase-selective enrichment enables quantitative phosphoproteomics of the kinome across the cell cycle.</title>
        <authorList>
            <person name="Daub H."/>
            <person name="Olsen J.V."/>
            <person name="Bairlein M."/>
            <person name="Gnad F."/>
            <person name="Oppermann F.S."/>
            <person name="Korner R."/>
            <person name="Greff Z."/>
            <person name="Keri G."/>
            <person name="Stemmann O."/>
            <person name="Mann M."/>
        </authorList>
    </citation>
    <scope>PHOSPHORYLATION [LARGE SCALE ANALYSIS] AT SER-393</scope>
    <scope>IDENTIFICATION BY MASS SPECTROMETRY [LARGE SCALE ANALYSIS]</scope>
    <source>
        <tissue>Cervix carcinoma</tissue>
    </source>
</reference>
<reference key="53">
    <citation type="journal article" date="2008" name="Mol. Cell">
        <title>CDYL bridges REST and histone methyltransferases for gene repression and suppression of cellular transformation.</title>
        <authorList>
            <person name="Mulligan P."/>
            <person name="Westbrook T.F."/>
            <person name="Ottinger M."/>
            <person name="Pavlova N."/>
            <person name="Chang B."/>
            <person name="Macia E."/>
            <person name="Shi Y.J."/>
            <person name="Barretina J."/>
            <person name="Liu J."/>
            <person name="Howley P.M."/>
            <person name="Elledge S.J."/>
            <person name="Shi Y."/>
        </authorList>
    </citation>
    <scope>IDENTIFICATION IN A COMPLEX WITH CDYL; MIER1; MIER2 AND HDAC2</scope>
</reference>
<reference key="54">
    <citation type="journal article" date="2008" name="Nat. Chem. Biol.">
        <title>Protein lysine methyltransferase G9a acts on non-histone targets.</title>
        <authorList>
            <person name="Rathert P."/>
            <person name="Dhayalan A."/>
            <person name="Murakami M."/>
            <person name="Zhang X."/>
            <person name="Tamas R."/>
            <person name="Jurkowska R."/>
            <person name="Komatsu Y."/>
            <person name="Shinkai Y."/>
            <person name="Cheng X."/>
            <person name="Jeltsch A."/>
        </authorList>
    </citation>
    <scope>METHYLATION AT LYS-432</scope>
</reference>
<reference key="55">
    <citation type="journal article" date="2008" name="Neuron">
        <title>A calcium-dependent switch in a CREST-BRG1 complex regulates activity-dependent gene expression.</title>
        <authorList>
            <person name="Qiu Z."/>
            <person name="Ghosh A."/>
        </authorList>
    </citation>
    <scope>FUNCTION</scope>
    <scope>INTERACTION WITH RB1 AND SMARCA4/BRG1</scope>
</reference>
<reference key="56">
    <citation type="journal article" date="2008" name="Proc. Natl. Acad. Sci. U.S.A.">
        <title>A quantitative atlas of mitotic phosphorylation.</title>
        <authorList>
            <person name="Dephoure N."/>
            <person name="Zhou C."/>
            <person name="Villen J."/>
            <person name="Beausoleil S.A."/>
            <person name="Bakalarski C.E."/>
            <person name="Elledge S.J."/>
            <person name="Gygi S.P."/>
        </authorList>
    </citation>
    <scope>IDENTIFICATION BY MASS SPECTROMETRY [LARGE SCALE ANALYSIS]</scope>
    <source>
        <tissue>Cervix carcinoma</tissue>
    </source>
</reference>
<reference key="57">
    <citation type="journal article" date="2008" name="Proteomics">
        <title>Large-scale phosphoproteome analysis of human liver tissue by enrichment and fractionation of phosphopeptides with strong anion exchange chromatography.</title>
        <authorList>
            <person name="Han G."/>
            <person name="Ye M."/>
            <person name="Zhou H."/>
            <person name="Jiang X."/>
            <person name="Feng S."/>
            <person name="Jiang X."/>
            <person name="Tian R."/>
            <person name="Wan D."/>
            <person name="Zou H."/>
            <person name="Gu J."/>
        </authorList>
    </citation>
    <scope>PHOSPHORYLATION [LARGE SCALE ANALYSIS] AT SER-421 AND SER-423</scope>
    <scope>IDENTIFICATION BY MASS SPECTROMETRY [LARGE SCALE ANALYSIS]</scope>
    <source>
        <tissue>Liver</tissue>
    </source>
</reference>
<reference key="58">
    <citation type="journal article" date="2009" name="Anal. Chem.">
        <title>Lys-N and trypsin cover complementary parts of the phosphoproteome in a refined SCX-based approach.</title>
        <authorList>
            <person name="Gauci S."/>
            <person name="Helbig A.O."/>
            <person name="Slijper M."/>
            <person name="Krijgsveld J."/>
            <person name="Heck A.J."/>
            <person name="Mohammed S."/>
        </authorList>
    </citation>
    <scope>IDENTIFICATION BY MASS SPECTROMETRY [LARGE SCALE ANALYSIS]</scope>
</reference>
<reference key="59">
    <citation type="journal article" date="2009" name="J. Biol. Chem.">
        <title>SKI and MEL1 cooperate to inhibit transforming growth factor-beta signal in gastric cancer cells.</title>
        <authorList>
            <person name="Takahata M."/>
            <person name="Inoue Y."/>
            <person name="Tsuda H."/>
            <person name="Imoto I."/>
            <person name="Koinuma D."/>
            <person name="Hayashi M."/>
            <person name="Ichikura T."/>
            <person name="Yamori T."/>
            <person name="Nagasaki K."/>
            <person name="Yoshida M."/>
            <person name="Matsuoka M."/>
            <person name="Morishita K."/>
            <person name="Yuki K."/>
            <person name="Hanyu A."/>
            <person name="Miyazawa K."/>
            <person name="Inazawa J."/>
            <person name="Miyazono K."/>
            <person name="Imamura T."/>
        </authorList>
    </citation>
    <scope>INTERACTION WITH PRDM16 AND SMAD3</scope>
</reference>
<reference key="60">
    <citation type="journal article" date="2009" name="J. Biol. Chem.">
        <title>Endosomal adaptor proteins APPL1 and APPL2 are novel activators of beta-catenin/TCF-mediated transcription.</title>
        <authorList>
            <person name="Rashid S."/>
            <person name="Pilecka I."/>
            <person name="Torun A."/>
            <person name="Olchowik M."/>
            <person name="Bielinska B."/>
            <person name="Miaczynska M."/>
        </authorList>
    </citation>
    <scope>INTERACTION WITH RUVBL2; APPL2; APPL1; CTNNB1 AND HDAC2</scope>
</reference>
<reference key="61">
    <citation type="journal article" date="2009" name="PLoS ONE">
        <title>FE65 binds Teashirt, inhibiting expression of the primate-specific caspase-4.</title>
        <authorList>
            <person name="Kajiwara Y."/>
            <person name="Akram A."/>
            <person name="Katsel P."/>
            <person name="Haroutunian V."/>
            <person name="Schmeidler J."/>
            <person name="Beecham G."/>
            <person name="Haines J.L."/>
            <person name="Pericak-Vance M.A."/>
            <person name="Buxbaum J.D."/>
        </authorList>
    </citation>
    <scope>FUNCTION</scope>
    <scope>INTERACTION WITH TSHZ3</scope>
    <scope>IDENTIFICATION IN A TRIMERIC COMPLEX WITH APBB1 AND TSHZ3</scope>
</reference>
<reference key="62">
    <citation type="journal article" date="2009" name="Nat. Cell Biol.">
        <title>Chfr is linked to tumour metastasis through the downregulation of HDAC1.</title>
        <authorList>
            <person name="Oh Y.M."/>
            <person name="Kwon Y.E."/>
            <person name="Kim J.M."/>
            <person name="Bae S.J."/>
            <person name="Lee B.K."/>
            <person name="Yoo S.J."/>
            <person name="Chung C.H."/>
            <person name="Deshaies R.J."/>
            <person name="Seol J.H."/>
        </authorList>
    </citation>
    <scope>UBIQUITINATION</scope>
    <scope>ACTIVE SITE</scope>
    <scope>INTERACTION WITH CHFR</scope>
    <scope>MUTAGENESIS OF HIS-141; PHE-287 AND MET-297</scope>
</reference>
<reference key="63">
    <citation type="journal article" date="2009" name="Science">
        <title>Regulation of histone acetylation in the nucleus by sphingosine-1-phosphate.</title>
        <authorList>
            <person name="Hait N.C."/>
            <person name="Allegood J."/>
            <person name="Maceyka M."/>
            <person name="Strub G.M."/>
            <person name="Harikumar K.B."/>
            <person name="Singh S.K."/>
            <person name="Luo C."/>
            <person name="Marmorstein R."/>
            <person name="Kordula T."/>
            <person name="Milstien S."/>
            <person name="Spiegel S."/>
        </authorList>
    </citation>
    <scope>INTERACTION WITH SPHK2</scope>
</reference>
<reference key="64">
    <citation type="journal article" date="2009" name="Sci. Signal.">
        <title>Quantitative phosphoproteomic analysis of T cell receptor signaling reveals system-wide modulation of protein-protein interactions.</title>
        <authorList>
            <person name="Mayya V."/>
            <person name="Lundgren D.H."/>
            <person name="Hwang S.-I."/>
            <person name="Rezaul K."/>
            <person name="Wu L."/>
            <person name="Eng J.K."/>
            <person name="Rodionov V."/>
            <person name="Han D.K."/>
        </authorList>
    </citation>
    <scope>PHOSPHORYLATION [LARGE SCALE ANALYSIS] AT SER-393 AND SER-421</scope>
    <scope>IDENTIFICATION BY MASS SPECTROMETRY [LARGE SCALE ANALYSIS]</scope>
    <source>
        <tissue>Leukemic T-cell</tissue>
    </source>
</reference>
<reference key="65">
    <citation type="journal article" date="2009" name="Science">
        <title>Lysine acetylation targets protein complexes and co-regulates major cellular functions.</title>
        <authorList>
            <person name="Choudhary C."/>
            <person name="Kumar C."/>
            <person name="Gnad F."/>
            <person name="Nielsen M.L."/>
            <person name="Rehman M."/>
            <person name="Walther T.C."/>
            <person name="Olsen J.V."/>
            <person name="Mann M."/>
        </authorList>
    </citation>
    <scope>ACETYLATION [LARGE SCALE ANALYSIS] AT LYS-74 AND LYS-220</scope>
    <scope>IDENTIFICATION BY MASS SPECTROMETRY [LARGE SCALE ANALYSIS]</scope>
</reference>
<reference key="66">
    <citation type="journal article" date="2010" name="J. Biol. Chem.">
        <title>HDAC3 is negatively regulated by the nuclear protein DBC1.</title>
        <authorList>
            <person name="Chini C.C."/>
            <person name="Escande C."/>
            <person name="Nin V."/>
            <person name="Chini E.N."/>
        </authorList>
    </citation>
    <scope>INTERACTION WITH CCAR2</scope>
</reference>
<reference key="67">
    <citation type="journal article" date="2010" name="Mol. Biosyst.">
        <title>CDK2AP1/DOC-1 is a bona fide subunit of the Mi-2/NuRD complex.</title>
        <authorList>
            <person name="Spruijt C.G."/>
            <person name="Bartels S.J."/>
            <person name="Brinkman A.B."/>
            <person name="Tjeertes J.V."/>
            <person name="Poser I."/>
            <person name="Stunnenberg H.G."/>
            <person name="Vermeulen M."/>
        </authorList>
    </citation>
    <scope>INTERACTION WITH CDK2AP1</scope>
    <scope>IDENTIFICATION BY MASS SPECTROMETRY</scope>
    <scope>SUBCELLULAR LOCATION</scope>
</reference>
<reference key="68">
    <citation type="journal article" date="2010" name="Nat. Cell Biol.">
        <title>Histone deacetylase and Cullin3-REN(KCTD11) ubiquitin ligase interplay regulates Hedgehog signalling through Gli acetylation.</title>
        <authorList>
            <person name="Canettieri G."/>
            <person name="Di Marcotullio L."/>
            <person name="Greco A."/>
            <person name="Coni S."/>
            <person name="Antonucci L."/>
            <person name="Infante P."/>
            <person name="Pietrosanti L."/>
            <person name="De Smaele E."/>
            <person name="Ferretti E."/>
            <person name="Miele E."/>
            <person name="Pelloni M."/>
            <person name="De Simone G."/>
            <person name="Pedone E.M."/>
            <person name="Gallinari P."/>
            <person name="Giorgi A."/>
            <person name="Steinkuhler C."/>
            <person name="Vitagliano L."/>
            <person name="Pedone C."/>
            <person name="Schinin M.E."/>
            <person name="Screpanti I."/>
            <person name="Gulino A."/>
        </authorList>
    </citation>
    <scope>UBIQUITINATION BY KCTD11</scope>
</reference>
<reference key="69">
    <citation type="journal article" date="2010" name="Sci. Signal.">
        <title>Quantitative phosphoproteomics reveals widespread full phosphorylation site occupancy during mitosis.</title>
        <authorList>
            <person name="Olsen J.V."/>
            <person name="Vermeulen M."/>
            <person name="Santamaria A."/>
            <person name="Kumar C."/>
            <person name="Miller M.L."/>
            <person name="Jensen L.J."/>
            <person name="Gnad F."/>
            <person name="Cox J."/>
            <person name="Jensen T.S."/>
            <person name="Nigg E.A."/>
            <person name="Brunak S."/>
            <person name="Mann M."/>
        </authorList>
    </citation>
    <scope>PHOSPHORYLATION [LARGE SCALE ANALYSIS] AT SER-393; SER-421 AND SER-423</scope>
    <scope>IDENTIFICATION BY MASS SPECTROMETRY [LARGE SCALE ANALYSIS]</scope>
    <source>
        <tissue>Cervix carcinoma</tissue>
    </source>
</reference>
<reference key="70">
    <citation type="journal article" date="2011" name="BMC Syst. Biol.">
        <title>Initial characterization of the human central proteome.</title>
        <authorList>
            <person name="Burkard T.R."/>
            <person name="Planyavsky M."/>
            <person name="Kaupe I."/>
            <person name="Breitwieser F.P."/>
            <person name="Buerckstuemmer T."/>
            <person name="Bennett K.L."/>
            <person name="Superti-Furga G."/>
            <person name="Colinge J."/>
        </authorList>
    </citation>
    <scope>IDENTIFICATION BY MASS SPECTROMETRY [LARGE SCALE ANALYSIS]</scope>
</reference>
<reference key="71">
    <citation type="journal article" date="2011" name="Mol. Cell">
        <title>Maintenance of silent chromatin through replication requires SWI/SNF-like chromatin remodeler SMARCAD1.</title>
        <authorList>
            <person name="Rowbotham S.P."/>
            <person name="Barki L."/>
            <person name="Neves-Costa A."/>
            <person name="Santos F."/>
            <person name="Dean W."/>
            <person name="Hawkes N."/>
            <person name="Choudhary P."/>
            <person name="Will W.R."/>
            <person name="Webster J."/>
            <person name="Oxley D."/>
            <person name="Green C.M."/>
            <person name="Varga-Weisz P."/>
            <person name="Mermoud J.E."/>
        </authorList>
    </citation>
    <scope>INTERACTION WITH SMARCAD1</scope>
</reference>
<reference key="72">
    <citation type="journal article" date="2011" name="Mol. Cell. Biol.">
        <title>A novel mammalian complex containing Sin3B mitigates histone acetylation and RNA polymerase II progression within transcribed loci.</title>
        <authorList>
            <person name="Jelinic P."/>
            <person name="Pellegrino J."/>
            <person name="David G."/>
        </authorList>
    </citation>
    <scope>FUNCTION</scope>
    <scope>IDENTIFICATION IN THE SIN3B COMPLEX</scope>
</reference>
<reference key="73">
    <citation type="journal article" date="2011" name="PLoS ONE">
        <title>SUMOylation of DEC1 protein regulates its transcriptional activity and enhances its stability.</title>
        <authorList>
            <person name="Hong Y."/>
            <person name="Xing X."/>
            <person name="Li S."/>
            <person name="Bi H."/>
            <person name="Yang C."/>
            <person name="Zhao F."/>
            <person name="Liu Y."/>
            <person name="Ao X."/>
            <person name="Chang A.K."/>
            <person name="Wu H."/>
        </authorList>
    </citation>
    <scope>INTERACTION WITH BHLHE40</scope>
</reference>
<reference key="74">
    <citation type="journal article" date="2011" name="Sci. Signal.">
        <title>System-wide temporal characterization of the proteome and phosphoproteome of human embryonic stem cell differentiation.</title>
        <authorList>
            <person name="Rigbolt K.T."/>
            <person name="Prokhorova T.A."/>
            <person name="Akimov V."/>
            <person name="Henningsen J."/>
            <person name="Johansen P.T."/>
            <person name="Kratchmarova I."/>
            <person name="Kassem M."/>
            <person name="Mann M."/>
            <person name="Olsen J.V."/>
            <person name="Blagoev B."/>
        </authorList>
    </citation>
    <scope>PHOSPHORYLATION [LARGE SCALE ANALYSIS] AT SER-393; SER-421 AND SER-423</scope>
    <scope>IDENTIFICATION BY MASS SPECTROMETRY [LARGE SCALE ANALYSIS]</scope>
</reference>
<reference key="75">
    <citation type="journal article" date="2013" name="J. Proteome Res.">
        <title>Toward a comprehensive characterization of a human cancer cell phosphoproteome.</title>
        <authorList>
            <person name="Zhou H."/>
            <person name="Di Palma S."/>
            <person name="Preisinger C."/>
            <person name="Peng M."/>
            <person name="Polat A.N."/>
            <person name="Heck A.J."/>
            <person name="Mohammed S."/>
        </authorList>
    </citation>
    <scope>PHOSPHORYLATION [LARGE SCALE ANALYSIS] AT SER-393; SER-409; SER-421 AND SER-423</scope>
    <scope>IDENTIFICATION BY MASS SPECTROMETRY [LARGE SCALE ANALYSIS]</scope>
    <source>
        <tissue>Cervix carcinoma</tissue>
        <tissue>Erythroleukemia</tissue>
    </source>
</reference>
<reference key="76">
    <citation type="journal article" date="2014" name="J. Proteomics">
        <title>An enzyme assisted RP-RPLC approach for in-depth analysis of human liver phosphoproteome.</title>
        <authorList>
            <person name="Bian Y."/>
            <person name="Song C."/>
            <person name="Cheng K."/>
            <person name="Dong M."/>
            <person name="Wang F."/>
            <person name="Huang J."/>
            <person name="Sun D."/>
            <person name="Wang L."/>
            <person name="Ye M."/>
            <person name="Zou H."/>
        </authorList>
    </citation>
    <scope>PHOSPHORYLATION [LARGE SCALE ANALYSIS] AT SER-393</scope>
    <scope>IDENTIFICATION BY MASS SPECTROMETRY [LARGE SCALE ANALYSIS]</scope>
    <source>
        <tissue>Liver</tissue>
    </source>
</reference>
<reference key="77">
    <citation type="journal article" date="2014" name="Nat. Struct. Mol. Biol.">
        <title>Uncovering global SUMOylation signaling networks in a site-specific manner.</title>
        <authorList>
            <person name="Hendriks I.A."/>
            <person name="D'Souza R.C."/>
            <person name="Yang B."/>
            <person name="Verlaan-de Vries M."/>
            <person name="Mann M."/>
            <person name="Vertegaal A.C."/>
        </authorList>
    </citation>
    <scope>SUMOYLATION [LARGE SCALE ANALYSIS] AT LYS-444; LYS-457 AND LYS-476</scope>
    <scope>IDENTIFICATION BY MASS SPECTROMETRY [LARGE SCALE ANALYSIS]</scope>
</reference>
<reference key="78">
    <citation type="journal article" date="2015" name="Biochim. Biophys. Acta">
        <title>Pokemon (FBI-1) interacts with Smad4 to repress TGF-beta-induced transcriptional responses.</title>
        <authorList>
            <person name="Yang Y."/>
            <person name="Cui J."/>
            <person name="Xue F."/>
            <person name="Zhang C."/>
            <person name="Mei Z."/>
            <person name="Wang Y."/>
            <person name="Bi M."/>
            <person name="Shan D."/>
            <person name="Meredith A."/>
            <person name="Li H."/>
            <person name="Xu Z.Q."/>
        </authorList>
    </citation>
    <scope>INTERACTION WITH SMAD4 AND ZBTB7A</scope>
</reference>
<reference key="79">
    <citation type="journal article" date="2015" name="Cell Rep.">
        <title>SUMO-2 orchestrates chromatin modifiers in response to DNA damage.</title>
        <authorList>
            <person name="Hendriks I.A."/>
            <person name="Treffers L.W."/>
            <person name="Verlaan-de Vries M."/>
            <person name="Olsen J.V."/>
            <person name="Vertegaal A.C."/>
        </authorList>
    </citation>
    <scope>SUMOYLATION [LARGE SCALE ANALYSIS] AT LYS-476</scope>
    <scope>IDENTIFICATION BY MASS SPECTROMETRY [LARGE SCALE ANALYSIS]</scope>
</reference>
<reference key="80">
    <citation type="journal article" date="2015" name="Genes Dev.">
        <title>Screen identifies bromodomain protein ZMYND8 in chromatin recognition of transcription-associated DNA damage that promotes homologous recombination.</title>
        <authorList>
            <person name="Gong F."/>
            <person name="Chiu L.Y."/>
            <person name="Cox B."/>
            <person name="Aymard F."/>
            <person name="Clouaire T."/>
            <person name="Leung J.W."/>
            <person name="Cammarata M."/>
            <person name="Perez M."/>
            <person name="Agarwal P."/>
            <person name="Brodbelt J.S."/>
            <person name="Legube G."/>
            <person name="Miller K.M."/>
        </authorList>
    </citation>
    <scope>INTERACTION WITH ZMYND8 AND CHD4</scope>
    <scope>IDENTIFICATION BY MASS SPECTROMETRY</scope>
</reference>
<reference key="81">
    <citation type="journal article" date="2015" name="Mol. Cell. Proteomics">
        <title>System-wide analysis of SUMOylation dynamics in response to replication stress reveals novel small ubiquitin-like modified target proteins and acceptor lysines relevant for genome stability.</title>
        <authorList>
            <person name="Xiao Z."/>
            <person name="Chang J.G."/>
            <person name="Hendriks I.A."/>
            <person name="Sigurdsson J.O."/>
            <person name="Olsen J.V."/>
            <person name="Vertegaal A.C."/>
        </authorList>
    </citation>
    <scope>SUMOYLATION [LARGE SCALE ANALYSIS] AT LYS-444 AND LYS-476</scope>
    <scope>IDENTIFICATION BY MASS SPECTROMETRY [LARGE SCALE ANALYSIS]</scope>
</reference>
<reference key="82">
    <citation type="journal article" date="2015" name="Nucleic Acids Res.">
        <title>Structural and functional characterization of a cell cycle associated HDAC1/2 complex reveals the structural basis for complex assembly and nucleosome targeting.</title>
        <authorList>
            <person name="Itoh T."/>
            <person name="Fairall L."/>
            <person name="Muskett F.W."/>
            <person name="Milano C.P."/>
            <person name="Watson P.J."/>
            <person name="Arnaudo N."/>
            <person name="Saleh A."/>
            <person name="Millard C.J."/>
            <person name="El-Mezgueldi M."/>
            <person name="Martino F."/>
            <person name="Schwabe J.W."/>
        </authorList>
    </citation>
    <scope>INTERACTION WITH DNTTIP1</scope>
    <scope>IDENTIFICATION BY MASS SPECTROMETRY</scope>
</reference>
<reference key="83">
    <citation type="journal article" date="2015" name="PLoS ONE">
        <title>Identification of Novel Proteins Co-Purifying with Cockayne Syndrome Group B (CSB) Reveals Potential Roles for CSB in RNA Metabolism and Chromatin Dynamics.</title>
        <authorList>
            <person name="Nicolai S."/>
            <person name="Filippi S."/>
            <person name="Caputo M."/>
            <person name="Cipak L."/>
            <person name="Gregan J."/>
            <person name="Ammerer G."/>
            <person name="Frontini M."/>
            <person name="Willems D."/>
            <person name="Prantera G."/>
            <person name="Balajee A.S."/>
            <person name="Proietti-De-Santis L."/>
        </authorList>
    </citation>
    <scope>INTERACTION WITH ERCC6</scope>
</reference>
<reference key="84">
    <citation type="journal article" date="2016" name="Am. J. Hum. Genet.">
        <title>De novo mutations in CHD4, an ATP-dependent chromatin remodeler gene, cause an intellectual disability syndrome with distinctive dysmorphisms.</title>
        <authorList>
            <consortium name="DDD Study"/>
            <person name="Weiss K."/>
            <person name="Terhal P.A."/>
            <person name="Cohen L."/>
            <person name="Bruccoleri M."/>
            <person name="Irving M."/>
            <person name="Martinez A.F."/>
            <person name="Rosenfeld J.A."/>
            <person name="Machol K."/>
            <person name="Yang Y."/>
            <person name="Liu P."/>
            <person name="Walkiewicz M."/>
            <person name="Beuten J."/>
            <person name="Gomez-Ospina N."/>
            <person name="Haude K."/>
            <person name="Fong C.T."/>
            <person name="Enns G.M."/>
            <person name="Bernstein J.A."/>
            <person name="Fan J."/>
            <person name="Gotway G."/>
            <person name="Ghorbani M."/>
            <person name="van Gassen K."/>
            <person name="Monroe G.R."/>
            <person name="van Haaften G."/>
            <person name="Basel-Vanagaite L."/>
            <person name="Yang X.J."/>
            <person name="Campeau P.M."/>
            <person name="Muenke M."/>
        </authorList>
    </citation>
    <scope>INTERACTION WITH CHD4</scope>
</reference>
<reference key="85">
    <citation type="journal article" date="2017" name="Cell Res.">
        <title>Class I histone deacetylases are major histone decrotonylases: evidence for critical and broad function of histone crotonylation in transcription.</title>
        <authorList>
            <person name="Wei W."/>
            <person name="Liu X."/>
            <person name="Chen J."/>
            <person name="Gao S."/>
            <person name="Lu L."/>
            <person name="Zhang H."/>
            <person name="Ding G."/>
            <person name="Wang Z."/>
            <person name="Chen Z."/>
            <person name="Shi T."/>
            <person name="Li J."/>
            <person name="Yu J."/>
            <person name="Wong J."/>
        </authorList>
    </citation>
    <scope>FUNCTION</scope>
    <scope>CATALYTIC ACTIVITY</scope>
    <scope>MUTAGENESIS OF 136-ALA--GLY-138; HIS-141 AND 424-GLU--GLU-426</scope>
</reference>
<reference key="86">
    <citation type="journal article" date="2017" name="Nat. Struct. Mol. Biol.">
        <title>Site-specific mapping of the human SUMO proteome reveals co-modification with phosphorylation.</title>
        <authorList>
            <person name="Hendriks I.A."/>
            <person name="Lyon D."/>
            <person name="Young C."/>
            <person name="Jensen L.J."/>
            <person name="Vertegaal A.C."/>
            <person name="Nielsen M.L."/>
        </authorList>
    </citation>
    <scope>SUMOYLATION [LARGE SCALE ANALYSIS] AT LYS-438; LYS-476 AND LYS-480</scope>
    <scope>IDENTIFICATION BY MASS SPECTROMETRY [LARGE SCALE ANALYSIS]</scope>
</reference>
<reference key="87">
    <citation type="journal article" date="2017" name="Nucleic Acids Res.">
        <title>CHD3 and CHD4 form distinct NuRD complexes with different yet overlapping functionality.</title>
        <authorList>
            <person name="Hoffmeister H."/>
            <person name="Fuchs A."/>
            <person name="Erdel F."/>
            <person name="Pinz S."/>
            <person name="Groebner-Ferreira R."/>
            <person name="Bruckmann A."/>
            <person name="Deutzmann R."/>
            <person name="Schwartz U."/>
            <person name="Maldonado R."/>
            <person name="Huber C."/>
            <person name="Dendorfer A.S."/>
            <person name="Rippe K."/>
            <person name="Laengst G."/>
        </authorList>
    </citation>
    <scope>FUNCTION</scope>
    <scope>IDENTIFICATION IN THE NURD COMPLEX</scope>
    <scope>INTERACTION WITH CHD3 AND CHD4</scope>
    <scope>IDENTIFICATION BY MASS SPECTROMETRY</scope>
    <scope>SUBCELLULAR LOCATION</scope>
</reference>
<reference key="88">
    <citation type="journal article" date="2018" name="Am. J. Hum. Genet.">
        <title>A recurrent de novo PACS2 heterozygous missense variant causes neonatal-onset developmental epileptic encephalopathy, facial dysmorphism, and cerebellar dysgenesis.</title>
        <authorList>
            <consortium name="DDD Study"/>
            <consortium name="C4RCD Research Group"/>
            <person name="Olson H.E."/>
            <person name="Jean-Marcais N."/>
            <person name="Yang E."/>
            <person name="Heron D."/>
            <person name="Tatton-Brown K."/>
            <person name="van der Zwaag P.A."/>
            <person name="Bijlsma E.K."/>
            <person name="Krock B.L."/>
            <person name="Backer E."/>
            <person name="Kamsteeg E.J."/>
            <person name="Sinnema M."/>
            <person name="Reijnders M.R.F."/>
            <person name="Bearden D."/>
            <person name="Begtrup A."/>
            <person name="Telegrafi A."/>
            <person name="Lunsing R.J."/>
            <person name="Burglen L."/>
            <person name="Lesca G."/>
            <person name="Cho M.T."/>
            <person name="Smith L.A."/>
            <person name="Sheidley B.R."/>
            <person name="Moufawad El Achkar C."/>
            <person name="Pearl P.L."/>
            <person name="Poduri A."/>
            <person name="Skraban C.M."/>
            <person name="Tarpinian J."/>
            <person name="Nesbitt A.I."/>
            <person name="Fransen van de Putte D.E."/>
            <person name="Ruivenkamp C.A.L."/>
            <person name="Rump P."/>
            <person name="Chatron N."/>
            <person name="Sabatier I."/>
            <person name="De Bellescize J."/>
            <person name="Guibaud L."/>
            <person name="Sweetser D.A."/>
            <person name="Waxler J.L."/>
            <person name="Wierenga K.J."/>
            <person name="Donadieu J."/>
            <person name="Narayanan V."/>
            <person name="Ramsey K.M."/>
            <person name="Nava C."/>
            <person name="Riviere J.B."/>
            <person name="Vitobello A."/>
            <person name="Tran Mau-Them F."/>
            <person name="Philippe C."/>
            <person name="Bruel A.L."/>
            <person name="Duffourd Y."/>
            <person name="Thomas L."/>
            <person name="Lelieveld S.H."/>
            <person name="Schuurs-Hoeijmakers J."/>
            <person name="Brunner H.G."/>
            <person name="Keren B."/>
            <person name="Thevenon J."/>
            <person name="Faivre L."/>
            <person name="Thomas G."/>
            <person name="Thauvin-Robinet C."/>
        </authorList>
    </citation>
    <scope>INTERACTION WITH PACS2</scope>
</reference>
<reference key="89">
    <citation type="journal article" date="2018" name="Nature">
        <title>NP220 mediates silencing of unintegrated retroviral DNA.</title>
        <authorList>
            <person name="Zhu Y."/>
            <person name="Wang G.Z."/>
            <person name="Cingoez O."/>
            <person name="Goff S.P."/>
        </authorList>
    </citation>
    <scope>INTERACTION WITH ZNF638</scope>
</reference>
<reference key="90">
    <citation type="journal article" date="2018" name="PLoS Genet.">
        <title>The roles of SMYD4 in epigenetic regulation of cardiac development in zebrafish.</title>
        <authorList>
            <person name="Xiao D."/>
            <person name="Wang H."/>
            <person name="Hao L."/>
            <person name="Guo X."/>
            <person name="Ma X."/>
            <person name="Qian Y."/>
            <person name="Chen H."/>
            <person name="Ma J."/>
            <person name="Zhang J."/>
            <person name="Sheng W."/>
            <person name="Shou W."/>
            <person name="Huang G."/>
            <person name="Ma D."/>
        </authorList>
    </citation>
    <scope>INTERACTION WITH SMYD4</scope>
</reference>
<reference key="91">
    <citation type="journal article" date="2021" name="FEBS J.">
        <title>Cross-linking mass spectrometry reveals the structural topology of peripheral NuRD subunits relative to the core complex.</title>
        <authorList>
            <person name="Spruijt C.G."/>
            <person name="Graewe C."/>
            <person name="Kleinendorst S.C."/>
            <person name="Baltissen M.P.A."/>
            <person name="Vermeulen M."/>
        </authorList>
    </citation>
    <scope>IDENTIFICATION IN THE NURD COMPLEX</scope>
    <scope>INTERACTION WITH GATAD2A</scope>
    <scope>IDENTIFICATION BY MASS SPECTROMETRY</scope>
    <scope>SUBCELLULAR LOCATION</scope>
</reference>
<reference key="92">
    <citation type="journal article" date="2022" name="Cell Death Dis.">
        <title>ZMYND8 suppresses MAPT213 LncRNA transcription to promote neuronal differentiation.</title>
        <authorList>
            <person name="Adhikary S."/>
            <person name="Singh V."/>
            <person name="Choudhari R."/>
            <person name="Yang B."/>
            <person name="Adhikari S."/>
            <person name="Ramos E.I."/>
            <person name="Chaudhuri S."/>
            <person name="Roy S."/>
            <person name="Gadad S.S."/>
            <person name="Das C."/>
        </authorList>
    </citation>
    <scope>INTERACTION WITH ZMYND8 AND CHD4</scope>
</reference>
<reference key="93">
    <citation type="journal article" date="2022" name="Sci. Adv.">
        <title>Class I histone deacetylases (HDAC1-3) are histone lysine delactylases.</title>
        <authorList>
            <person name="Moreno-Yruela C."/>
            <person name="Zhang D."/>
            <person name="Wei W."/>
            <person name="Baek M."/>
            <person name="Liu W."/>
            <person name="Gao J."/>
            <person name="Dankova D."/>
            <person name="Nielsen A.L."/>
            <person name="Bolding J.E."/>
            <person name="Yang L."/>
            <person name="Jameson S.T."/>
            <person name="Wong J."/>
            <person name="Olsen C.A."/>
            <person name="Zhao Y."/>
        </authorList>
    </citation>
    <scope>FUNCTION</scope>
    <scope>CATALYTIC ACTIVITY</scope>
</reference>
<reference key="94">
    <citation type="journal article" date="2023" name="Epigenetics Chromatin">
        <title>The pattern of histone H3 epigenetic posttranslational modifications is regulated by the VRK1 chromatin kinase.</title>
        <authorList>
            <person name="Monte-Serrano E."/>
            <person name="Morejon-Garcia P."/>
            <person name="Campillo-Marcos I."/>
            <person name="Campos-Diaz A."/>
            <person name="Navarro-Carrasco E."/>
            <person name="Lazo P.A."/>
        </authorList>
    </citation>
    <scope>INTERACTION WITH VRK1</scope>
</reference>
<feature type="chain" id="PRO_0000114687" description="Histone deacetylase 1">
    <location>
        <begin position="1"/>
        <end position="482"/>
    </location>
</feature>
<feature type="region of interest" description="Histone deacetylase">
    <location>
        <begin position="9"/>
        <end position="321"/>
    </location>
</feature>
<feature type="region of interest" description="Disordered" evidence="5">
    <location>
        <begin position="390"/>
        <end position="482"/>
    </location>
</feature>
<feature type="compositionally biased region" description="Acidic residues" evidence="5">
    <location>
        <begin position="390"/>
        <end position="400"/>
    </location>
</feature>
<feature type="compositionally biased region" description="Basic and acidic residues" evidence="5">
    <location>
        <begin position="401"/>
        <end position="416"/>
    </location>
</feature>
<feature type="compositionally biased region" description="Acidic residues" evidence="5">
    <location>
        <begin position="417"/>
        <end position="427"/>
    </location>
</feature>
<feature type="compositionally biased region" description="Basic and acidic residues" evidence="5">
    <location>
        <begin position="443"/>
        <end position="482"/>
    </location>
</feature>
<feature type="active site" evidence="54 69">
    <location>
        <position position="141"/>
    </location>
</feature>
<feature type="binding site" evidence="2">
    <location>
        <position position="27"/>
    </location>
    <ligand>
        <name>1D-myo-inositol 1,4,5,6-tetrakisphosphate</name>
        <dbReference type="ChEBI" id="CHEBI:57627"/>
    </ligand>
</feature>
<feature type="binding site" evidence="2">
    <location>
        <position position="31"/>
    </location>
    <ligand>
        <name>1D-myo-inositol 1,4,5,6-tetrakisphosphate</name>
        <dbReference type="ChEBI" id="CHEBI:57627"/>
    </ligand>
</feature>
<feature type="binding site" evidence="2">
    <location>
        <position position="176"/>
    </location>
    <ligand>
        <name>Zn(2+)</name>
        <dbReference type="ChEBI" id="CHEBI:29105"/>
    </ligand>
</feature>
<feature type="binding site" evidence="2">
    <location>
        <position position="178"/>
    </location>
    <ligand>
        <name>Zn(2+)</name>
        <dbReference type="ChEBI" id="CHEBI:29105"/>
    </ligand>
</feature>
<feature type="binding site" evidence="2">
    <location>
        <position position="264"/>
    </location>
    <ligand>
        <name>Zn(2+)</name>
        <dbReference type="ChEBI" id="CHEBI:29105"/>
    </ligand>
</feature>
<feature type="binding site" evidence="2">
    <location>
        <position position="270"/>
    </location>
    <ligand>
        <name>1D-myo-inositol 1,4,5,6-tetrakisphosphate</name>
        <dbReference type="ChEBI" id="CHEBI:57627"/>
    </ligand>
</feature>
<feature type="modified residue" description="N6-acetyllysine; alternate" evidence="89">
    <location>
        <position position="74"/>
    </location>
</feature>
<feature type="modified residue" description="N6-acetyllysine" evidence="89">
    <location>
        <position position="220"/>
    </location>
</feature>
<feature type="modified residue" description="S-nitrosocysteine" evidence="3">
    <location>
        <position position="261"/>
    </location>
</feature>
<feature type="modified residue" description="S-nitrosocysteine" evidence="3">
    <location>
        <position position="273"/>
    </location>
</feature>
<feature type="modified residue" description="Phosphoserine" evidence="85 86 88 90 91 92 93 94">
    <location>
        <position position="393"/>
    </location>
</feature>
<feature type="modified residue" description="Phosphoserine" evidence="4">
    <location>
        <position position="406"/>
    </location>
</feature>
<feature type="modified residue" description="Phosphoserine" evidence="93">
    <location>
        <position position="409"/>
    </location>
</feature>
<feature type="modified residue" description="Phosphoserine; by CK2" evidence="16 85 87 90 91 92 93">
    <location>
        <position position="421"/>
    </location>
</feature>
<feature type="modified residue" description="Phosphoserine; by CK2" evidence="16 85 87 91 92 93">
    <location>
        <position position="423"/>
    </location>
</feature>
<feature type="modified residue" description="N6-methylated lysine; by EHMT2" evidence="50">
    <location>
        <position position="432"/>
    </location>
</feature>
<feature type="cross-link" description="Glycyl lysine isopeptide (Lys-Gly) (interchain with G-Cter in SUMO2); alternate" evidence="4">
    <location>
        <position position="74"/>
    </location>
</feature>
<feature type="cross-link" description="Glycyl lysine isopeptide (Lys-Gly) (interchain with G-Cter in SUMO2)" evidence="98">
    <location>
        <position position="438"/>
    </location>
</feature>
<feature type="cross-link" description="Glycyl lysine isopeptide (Lys-Gly) (interchain with G-Cter in SUMO); alternate" evidence="17">
    <location>
        <position position="444"/>
    </location>
</feature>
<feature type="cross-link" description="Glycyl lysine isopeptide (Lys-Gly) (interchain with G-Cter in SUMO2); alternate" evidence="95 96">
    <location>
        <position position="444"/>
    </location>
</feature>
<feature type="cross-link" description="Glycyl lysine isopeptide (Lys-Gly) (interchain with G-Cter in SUMO2)" evidence="4">
    <location>
        <position position="456"/>
    </location>
</feature>
<feature type="cross-link" description="Glycyl lysine isopeptide (Lys-Gly) (interchain with G-Cter in SUMO2)" evidence="95">
    <location>
        <position position="457"/>
    </location>
</feature>
<feature type="cross-link" description="Glycyl lysine isopeptide (Lys-Gly) (interchain with G-Cter in SUMO2)" evidence="4">
    <location>
        <position position="473"/>
    </location>
</feature>
<feature type="cross-link" description="Glycyl lysine isopeptide (Lys-Gly) (interchain with G-Cter in SUMO); alternate" evidence="17">
    <location>
        <position position="476"/>
    </location>
</feature>
<feature type="cross-link" description="Glycyl lysine isopeptide (Lys-Gly) (interchain with G-Cter in SUMO2); alternate" evidence="95 96 97 98">
    <location>
        <position position="476"/>
    </location>
</feature>
<feature type="cross-link" description="Glycyl lysine isopeptide (Lys-Gly) (interchain with G-Cter in SUMO2)" evidence="98">
    <location>
        <position position="480"/>
    </location>
</feature>
<feature type="mutagenesis site" description="Impaired protein deacetylase activity without affecting the protein decrotonylase activity." evidence="69">
    <original>AGG</original>
    <variation>VRPP</variation>
    <location>
        <begin position="136"/>
        <end position="138"/>
    </location>
</feature>
<feature type="mutagenesis site" description="Abolishes histone deacetylase and decrotonylase activities." evidence="54 69">
    <original>H</original>
    <variation>A</variation>
    <location>
        <position position="141"/>
    </location>
</feature>
<feature type="mutagenesis site" description="Abolishes interaction with CHFR; when associated with I-297." evidence="54">
    <original>F</original>
    <variation>Y</variation>
    <location>
        <position position="287"/>
    </location>
</feature>
<feature type="mutagenesis site" description="Abolishes interaction with CHFR; when associated with Y-287." evidence="54">
    <original>M</original>
    <variation>I</variation>
    <location>
        <position position="297"/>
    </location>
</feature>
<feature type="mutagenesis site" description="Strongly decreases deacetylase activity, and disrupts interaction with NuRD and SIN3 complexes.">
    <location>
        <begin position="391"/>
        <end position="482"/>
    </location>
</feature>
<feature type="mutagenesis site" description="Strongly decreases deacetylase activity, and disrupts interaction with NuRD and SIN3 complexes." evidence="16">
    <original>S</original>
    <variation>A</variation>
    <location>
        <position position="421"/>
    </location>
</feature>
<feature type="mutagenesis site" description="Slightly decreases deacetylase activity." evidence="16">
    <original>S</original>
    <variation>D</variation>
    <variation>E</variation>
    <location>
        <position position="421"/>
    </location>
</feature>
<feature type="mutagenesis site" description="Strongly decreases deacetylase activity, and disrupts interaction with NuRD and SIN3 complexes." evidence="16">
    <original>S</original>
    <variation>A</variation>
    <location>
        <position position="423"/>
    </location>
</feature>
<feature type="mutagenesis site" description="Decreases deacetylase activity." evidence="16">
    <original>S</original>
    <variation>D</variation>
    <variation>E</variation>
    <location>
        <position position="423"/>
    </location>
</feature>
<feature type="mutagenesis site" description="Abolished histone deacetylase and decrotonylase activities." evidence="69">
    <original>EEE</original>
    <variation>AEA</variation>
    <location>
        <begin position="424"/>
        <end position="426"/>
    </location>
</feature>
<feature type="mutagenesis site" description="Slightly decreases deacetylase activity, no effect on interaction with NuRD and SIN3 complexes." evidence="16">
    <original>E</original>
    <variation>A</variation>
    <location>
        <position position="424"/>
    </location>
</feature>
<feature type="mutagenesis site" description="No effect on deacetylase activity, no effect on interaction with NuRD and SIN3 complexes." evidence="16">
    <original>E</original>
    <variation>A</variation>
    <location>
        <position position="425"/>
    </location>
</feature>
<feature type="mutagenesis site" description="Decreases deacetylase activity, and disrupts interaction with NuRD and SIN3 complexes." evidence="16">
    <original>E</original>
    <variation>A</variation>
    <location>
        <position position="426"/>
    </location>
</feature>
<feature type="sequence conflict" description="In Ref. 2; BAA08909." evidence="80" ref="2">
    <original>W</original>
    <variation>R</variation>
    <location>
        <position position="312"/>
    </location>
</feature>
<feature type="strand" evidence="99">
    <location>
        <begin position="11"/>
        <end position="14"/>
    </location>
</feature>
<feature type="helix" evidence="99">
    <location>
        <begin position="19"/>
        <end position="21"/>
    </location>
</feature>
<feature type="helix" evidence="99">
    <location>
        <begin position="33"/>
        <end position="44"/>
    </location>
</feature>
<feature type="turn" evidence="100">
    <location>
        <begin position="45"/>
        <end position="47"/>
    </location>
</feature>
<feature type="helix" evidence="99">
    <location>
        <begin position="48"/>
        <end position="50"/>
    </location>
</feature>
<feature type="strand" evidence="99">
    <location>
        <begin position="51"/>
        <end position="56"/>
    </location>
</feature>
<feature type="helix" evidence="99">
    <location>
        <begin position="61"/>
        <end position="64"/>
    </location>
</feature>
<feature type="turn" evidence="99">
    <location>
        <begin position="65"/>
        <end position="67"/>
    </location>
</feature>
<feature type="helix" evidence="99">
    <location>
        <begin position="70"/>
        <end position="78"/>
    </location>
</feature>
<feature type="turn" evidence="99">
    <location>
        <begin position="83"/>
        <end position="86"/>
    </location>
</feature>
<feature type="helix" evidence="99">
    <location>
        <begin position="88"/>
        <end position="94"/>
    </location>
</feature>
<feature type="turn" evidence="99">
    <location>
        <begin position="97"/>
        <end position="99"/>
    </location>
</feature>
<feature type="helix" evidence="99">
    <location>
        <begin position="106"/>
        <end position="125"/>
    </location>
</feature>
<feature type="strand" evidence="99">
    <location>
        <begin position="130"/>
        <end position="136"/>
    </location>
</feature>
<feature type="strand" evidence="99">
    <location>
        <begin position="151"/>
        <end position="153"/>
    </location>
</feature>
<feature type="helix" evidence="99">
    <location>
        <begin position="155"/>
        <end position="163"/>
    </location>
</feature>
<feature type="turn" evidence="99">
    <location>
        <begin position="164"/>
        <end position="166"/>
    </location>
</feature>
<feature type="strand" evidence="99">
    <location>
        <begin position="170"/>
        <end position="174"/>
    </location>
</feature>
<feature type="strand" evidence="99">
    <location>
        <begin position="176"/>
        <end position="178"/>
    </location>
</feature>
<feature type="helix" evidence="99">
    <location>
        <begin position="181"/>
        <end position="186"/>
    </location>
</feature>
<feature type="turn" evidence="99">
    <location>
        <begin position="187"/>
        <end position="189"/>
    </location>
</feature>
<feature type="strand" evidence="99">
    <location>
        <begin position="191"/>
        <end position="200"/>
    </location>
</feature>
<feature type="strand" evidence="99">
    <location>
        <begin position="205"/>
        <end position="207"/>
    </location>
</feature>
<feature type="helix" evidence="99">
    <location>
        <begin position="217"/>
        <end position="219"/>
    </location>
</feature>
<feature type="strand" evidence="99">
    <location>
        <begin position="223"/>
        <end position="228"/>
    </location>
</feature>
<feature type="helix" evidence="99">
    <location>
        <begin position="234"/>
        <end position="252"/>
    </location>
</feature>
<feature type="strand" evidence="99">
    <location>
        <begin position="255"/>
        <end position="260"/>
    </location>
</feature>
<feature type="helix" evidence="99">
    <location>
        <begin position="263"/>
        <end position="265"/>
    </location>
</feature>
<feature type="helix" evidence="99">
    <location>
        <begin position="278"/>
        <end position="289"/>
    </location>
</feature>
<feature type="strand" evidence="99">
    <location>
        <begin position="295"/>
        <end position="298"/>
    </location>
</feature>
<feature type="helix" evidence="99">
    <location>
        <begin position="305"/>
        <end position="319"/>
    </location>
</feature>
<feature type="helix" evidence="99">
    <location>
        <begin position="334"/>
        <end position="336"/>
    </location>
</feature>
<feature type="turn" evidence="99">
    <location>
        <begin position="338"/>
        <end position="340"/>
    </location>
</feature>
<feature type="strand" evidence="101">
    <location>
        <begin position="342"/>
        <end position="344"/>
    </location>
</feature>
<feature type="helix" evidence="99">
    <location>
        <begin position="356"/>
        <end position="371"/>
    </location>
</feature>
<keyword id="KW-0002">3D-structure</keyword>
<keyword id="KW-0007">Acetylation</keyword>
<keyword id="KW-0090">Biological rhythms</keyword>
<keyword id="KW-0156">Chromatin regulator</keyword>
<keyword id="KW-0378">Hydrolase</keyword>
<keyword id="KW-1017">Isopeptide bond</keyword>
<keyword id="KW-0479">Metal-binding</keyword>
<keyword id="KW-0488">Methylation</keyword>
<keyword id="KW-0539">Nucleus</keyword>
<keyword id="KW-0597">Phosphoprotein</keyword>
<keyword id="KW-1267">Proteomics identification</keyword>
<keyword id="KW-1185">Reference proteome</keyword>
<keyword id="KW-0678">Repressor</keyword>
<keyword id="KW-0702">S-nitrosylation</keyword>
<keyword id="KW-0804">Transcription</keyword>
<keyword id="KW-0805">Transcription regulation</keyword>
<keyword id="KW-0832">Ubl conjugation</keyword>
<keyword id="KW-0862">Zinc</keyword>
<dbReference type="EC" id="3.5.1.98" evidence="37 69"/>
<dbReference type="EC" id="3.5.1.-" evidence="33 81 82 83 69 75"/>
<dbReference type="EMBL" id="U50079">
    <property type="protein sequence ID" value="AAC50475.1"/>
    <property type="molecule type" value="mRNA"/>
</dbReference>
<dbReference type="EMBL" id="D50405">
    <property type="protein sequence ID" value="BAA08909.1"/>
    <property type="molecule type" value="mRNA"/>
</dbReference>
<dbReference type="EMBL" id="BC000301">
    <property type="protein sequence ID" value="AAH00301.1"/>
    <property type="molecule type" value="mRNA"/>
</dbReference>
<dbReference type="CCDS" id="CCDS360.1"/>
<dbReference type="RefSeq" id="NP_004955.2">
    <property type="nucleotide sequence ID" value="NM_004964.2"/>
</dbReference>
<dbReference type="PDB" id="4BKX">
    <property type="method" value="X-ray"/>
    <property type="resolution" value="3.00 A"/>
    <property type="chains" value="B=1-482"/>
</dbReference>
<dbReference type="PDB" id="5ICN">
    <property type="method" value="X-ray"/>
    <property type="resolution" value="3.30 A"/>
    <property type="chains" value="B=1-376"/>
</dbReference>
<dbReference type="PDB" id="6Z2J">
    <property type="method" value="EM"/>
    <property type="resolution" value="4.00 A"/>
    <property type="chains" value="C/E=1-482"/>
</dbReference>
<dbReference type="PDB" id="6Z2K">
    <property type="method" value="EM"/>
    <property type="resolution" value="4.50 A"/>
    <property type="chains" value="C/E/I/K=1-482"/>
</dbReference>
<dbReference type="PDB" id="7AO8">
    <property type="method" value="EM"/>
    <property type="resolution" value="4.50 A"/>
    <property type="chains" value="B/E=1-482"/>
</dbReference>
<dbReference type="PDB" id="7AO9">
    <property type="method" value="EM"/>
    <property type="resolution" value="6.10 A"/>
    <property type="chains" value="B/E=1-482"/>
</dbReference>
<dbReference type="PDB" id="7AOA">
    <property type="method" value="EM"/>
    <property type="resolution" value="19.40 A"/>
    <property type="chains" value="B/E=1-482"/>
</dbReference>
<dbReference type="PDB" id="7SME">
    <property type="method" value="X-ray"/>
    <property type="resolution" value="2.64 A"/>
    <property type="chains" value="B=413-422"/>
</dbReference>
<dbReference type="PDB" id="8VOJ">
    <property type="method" value="EM"/>
    <property type="resolution" value="3.77 A"/>
    <property type="chains" value="C=1-482"/>
</dbReference>
<dbReference type="PDB" id="8VPQ">
    <property type="method" value="EM"/>
    <property type="resolution" value="3.30 A"/>
    <property type="chains" value="C=1-482"/>
</dbReference>
<dbReference type="PDB" id="8VRT">
    <property type="method" value="EM"/>
    <property type="resolution" value="3.42 A"/>
    <property type="chains" value="C=1-482"/>
</dbReference>
<dbReference type="PDBsum" id="4BKX"/>
<dbReference type="PDBsum" id="5ICN"/>
<dbReference type="PDBsum" id="6Z2J"/>
<dbReference type="PDBsum" id="6Z2K"/>
<dbReference type="PDBsum" id="7AO8"/>
<dbReference type="PDBsum" id="7AO9"/>
<dbReference type="PDBsum" id="7AOA"/>
<dbReference type="PDBsum" id="7SME"/>
<dbReference type="PDBsum" id="8VOJ"/>
<dbReference type="PDBsum" id="8VPQ"/>
<dbReference type="PDBsum" id="8VRT"/>
<dbReference type="EMDB" id="EMD-11041"/>
<dbReference type="EMDB" id="EMD-11042"/>
<dbReference type="EMDB" id="EMD-11837"/>
<dbReference type="EMDB" id="EMD-11838"/>
<dbReference type="EMDB" id="EMD-11839"/>
<dbReference type="EMDB" id="EMD-21382"/>
<dbReference type="EMDB" id="EMD-43386"/>
<dbReference type="EMDB" id="EMD-43413"/>
<dbReference type="EMDB" id="EMD-43487"/>
<dbReference type="SASBDB" id="Q13547"/>
<dbReference type="SMR" id="Q13547"/>
<dbReference type="BioGRID" id="109315">
    <property type="interactions" value="1110"/>
</dbReference>
<dbReference type="ComplexPortal" id="CPX-2184">
    <property type="entry name" value="MIER1 histone deacetylase complex, HDAC1 variant"/>
</dbReference>
<dbReference type="ComplexPortal" id="CPX-2874">
    <property type="entry name" value="MiDAC histone deacetylase complex, HDAC1 variant"/>
</dbReference>
<dbReference type="ComplexPortal" id="CPX-3321">
    <property type="entry name" value="SIN3A histone deacetylase complex"/>
</dbReference>
<dbReference type="ComplexPortal" id="CPX-3322">
    <property type="entry name" value="SIN3B histone deacetylase complex"/>
</dbReference>
<dbReference type="ComplexPortal" id="CPX-3323">
    <property type="entry name" value="SIN3A histone deacetylase complex, ES cell-specific variant"/>
</dbReference>
<dbReference type="ComplexPortal" id="CPX-880">
    <property type="entry name" value="MBD2/NuRD nucleosome remodeling and deacetylase complex"/>
</dbReference>
<dbReference type="ComplexPortal" id="CPX-8943">
    <property type="entry name" value="CoREST transcriptional corepressor complex, RCOR1-HDAC1 variant"/>
</dbReference>
<dbReference type="ComplexPortal" id="CPX-9066">
    <property type="entry name" value="CoREST transcriptional corepressor complex, RCOR2-HDAC1 variant"/>
</dbReference>
<dbReference type="ComplexPortal" id="CPX-9068">
    <property type="entry name" value="CoREST transcriptional corepressor complex, RCOR3-HDAC1 variant"/>
</dbReference>
<dbReference type="ComplexPortal" id="CPX-9163">
    <property type="entry name" value="MIER2 histone deacetylase complex, HDAC1 variant"/>
</dbReference>
<dbReference type="ComplexPortal" id="CPX-922">
    <property type="entry name" value="MBD3/NuRD nucleosome remodeling and deacetylase complex"/>
</dbReference>
<dbReference type="CORUM" id="Q13547"/>
<dbReference type="DIP" id="DIP-24184N"/>
<dbReference type="FunCoup" id="Q13547">
    <property type="interactions" value="3836"/>
</dbReference>
<dbReference type="IntAct" id="Q13547">
    <property type="interactions" value="401"/>
</dbReference>
<dbReference type="MINT" id="Q13547"/>
<dbReference type="STRING" id="9606.ENSP00000362649"/>
<dbReference type="BindingDB" id="Q13547"/>
<dbReference type="ChEMBL" id="CHEMBL325"/>
<dbReference type="DrugBank" id="DB07553">
    <property type="generic name" value="9,9,9-TRIFLUORO-8-OXO-N-PHENYLNONANAMIDE"/>
</dbReference>
<dbReference type="DrugBank" id="DB12565">
    <property type="generic name" value="Abexinostat"/>
</dbReference>
<dbReference type="DrugBank" id="DB05103">
    <property type="generic name" value="AN-9"/>
</dbReference>
<dbReference type="DrugBank" id="DB01169">
    <property type="generic name" value="Arsenic trioxide"/>
</dbReference>
<dbReference type="DrugBank" id="DB05015">
    <property type="generic name" value="Belinostat"/>
</dbReference>
<dbReference type="DrugBank" id="DB03568">
    <property type="generic name" value="Butyric Acid"/>
</dbReference>
<dbReference type="DrugBank" id="DB17034">
    <property type="generic name" value="Dacinostat"/>
</dbReference>
<dbReference type="DrugBank" id="DB01262">
    <property type="generic name" value="Decitabine"/>
</dbReference>
<dbReference type="DrugBank" id="DB11841">
    <property type="generic name" value="Entinostat"/>
</dbReference>
<dbReference type="DrugBank" id="DB08868">
    <property type="generic name" value="Fingolimod"/>
</dbReference>
<dbReference type="DrugBank" id="DB12645">
    <property type="generic name" value="Givinostat"/>
</dbReference>
<dbReference type="DrugBank" id="DB14979">
    <property type="generic name" value="Martinostat"/>
</dbReference>
<dbReference type="DrugBank" id="DB11830">
    <property type="generic name" value="Mocetinostat"/>
</dbReference>
<dbReference type="DrugBank" id="DB12279">
    <property type="generic name" value="OBP-801"/>
</dbReference>
<dbReference type="DrugBank" id="DB06603">
    <property type="generic name" value="Panobinostat"/>
</dbReference>
<dbReference type="DrugBank" id="DB06819">
    <property type="generic name" value="Phenylbutyric acid"/>
</dbReference>
<dbReference type="DrugBank" id="DB05223">
    <property type="generic name" value="Pracinostat"/>
</dbReference>
<dbReference type="DrugBank" id="DB03766">
    <property type="generic name" value="Propanoic acid"/>
</dbReference>
<dbReference type="DrugBank" id="DB12847">
    <property type="generic name" value="Pyroxamide"/>
</dbReference>
<dbReference type="DrugBank" id="DB12392">
    <property type="generic name" value="Resminostat"/>
</dbReference>
<dbReference type="DrugBank" id="DB16955">
    <property type="generic name" value="RG-2833"/>
</dbReference>
<dbReference type="DrugBank" id="DB06176">
    <property type="generic name" value="Romidepsin"/>
</dbReference>
<dbReference type="DrugBank" id="DB17053">
    <property type="generic name" value="Scriptaid"/>
</dbReference>
<dbReference type="DrugBank" id="DB12291">
    <property type="generic name" value="Tacedinaline"/>
</dbReference>
<dbReference type="DrugBank" id="DB06334">
    <property type="generic name" value="Tucidinostat"/>
</dbReference>
<dbReference type="DrugBank" id="DB00313">
    <property type="generic name" value="Valproic acid"/>
</dbReference>
<dbReference type="DrugBank" id="DB02546">
    <property type="generic name" value="Vorinostat"/>
</dbReference>
<dbReference type="DrugBank" id="DB01593">
    <property type="generic name" value="Zinc"/>
</dbReference>
<dbReference type="DrugBank" id="DB14487">
    <property type="generic name" value="Zinc acetate"/>
</dbReference>
<dbReference type="DrugBank" id="DB14533">
    <property type="generic name" value="Zinc chloride"/>
</dbReference>
<dbReference type="DrugBank" id="DB14548">
    <property type="generic name" value="Zinc sulfate, unspecified form"/>
</dbReference>
<dbReference type="DrugCentral" id="Q13547"/>
<dbReference type="GuidetoPHARMACOLOGY" id="2658"/>
<dbReference type="GlyCosmos" id="Q13547">
    <property type="glycosylation" value="2 sites, 1 glycan"/>
</dbReference>
<dbReference type="GlyGen" id="Q13547">
    <property type="glycosylation" value="4 sites, 1 O-linked glycan (3 sites)"/>
</dbReference>
<dbReference type="iPTMnet" id="Q13547"/>
<dbReference type="MetOSite" id="Q13547"/>
<dbReference type="PhosphoSitePlus" id="Q13547"/>
<dbReference type="SwissPalm" id="Q13547"/>
<dbReference type="BioMuta" id="HDAC1"/>
<dbReference type="DMDM" id="2498443"/>
<dbReference type="CPTAC" id="CPTAC-1248"/>
<dbReference type="CPTAC" id="CPTAC-2607"/>
<dbReference type="jPOST" id="Q13547"/>
<dbReference type="MassIVE" id="Q13547"/>
<dbReference type="PaxDb" id="9606-ENSP00000362649"/>
<dbReference type="PeptideAtlas" id="Q13547"/>
<dbReference type="ProteomicsDB" id="59529"/>
<dbReference type="Pumba" id="Q13547"/>
<dbReference type="TopDownProteomics" id="Q13547"/>
<dbReference type="Antibodypedia" id="3760">
    <property type="antibodies" value="1625 antibodies from 51 providers"/>
</dbReference>
<dbReference type="DNASU" id="3065"/>
<dbReference type="Ensembl" id="ENST00000373548.8">
    <property type="protein sequence ID" value="ENSP00000362649.3"/>
    <property type="gene ID" value="ENSG00000116478.13"/>
</dbReference>
<dbReference type="GeneID" id="3065"/>
<dbReference type="KEGG" id="hsa:3065"/>
<dbReference type="MANE-Select" id="ENST00000373548.8">
    <property type="protein sequence ID" value="ENSP00000362649.3"/>
    <property type="RefSeq nucleotide sequence ID" value="NM_004964.3"/>
    <property type="RefSeq protein sequence ID" value="NP_004955.2"/>
</dbReference>
<dbReference type="AGR" id="HGNC:4852"/>
<dbReference type="CTD" id="3065"/>
<dbReference type="DisGeNET" id="3065"/>
<dbReference type="GeneCards" id="HDAC1"/>
<dbReference type="HGNC" id="HGNC:4852">
    <property type="gene designation" value="HDAC1"/>
</dbReference>
<dbReference type="HPA" id="ENSG00000116478">
    <property type="expression patterns" value="Low tissue specificity"/>
</dbReference>
<dbReference type="MalaCards" id="HDAC1"/>
<dbReference type="MIM" id="601241">
    <property type="type" value="gene"/>
</dbReference>
<dbReference type="neXtProt" id="NX_Q13547"/>
<dbReference type="OpenTargets" id="ENSG00000116478"/>
<dbReference type="PharmGKB" id="PA29226"/>
<dbReference type="VEuPathDB" id="HostDB:ENSG00000116478"/>
<dbReference type="eggNOG" id="KOG1342">
    <property type="taxonomic scope" value="Eukaryota"/>
</dbReference>
<dbReference type="GeneTree" id="ENSGT00940000154301"/>
<dbReference type="HOGENOM" id="CLU_007727_7_4_1"/>
<dbReference type="InParanoid" id="Q13547"/>
<dbReference type="OMA" id="EHRWDKH"/>
<dbReference type="OrthoDB" id="1918432at2759"/>
<dbReference type="PAN-GO" id="Q13547">
    <property type="GO annotations" value="3 GO annotations based on evolutionary models"/>
</dbReference>
<dbReference type="PhylomeDB" id="Q13547"/>
<dbReference type="TreeFam" id="TF106171"/>
<dbReference type="BRENDA" id="3.5.1.98">
    <property type="organism ID" value="2681"/>
</dbReference>
<dbReference type="PathwayCommons" id="Q13547"/>
<dbReference type="Reactome" id="R-HSA-1362277">
    <property type="pathway name" value="Transcription of E2F targets under negative control by DREAM complex"/>
</dbReference>
<dbReference type="Reactome" id="R-HSA-1362300">
    <property type="pathway name" value="Transcription of E2F targets under negative control by p107 (RBL1) and p130 (RBL2) in complex with HDAC1"/>
</dbReference>
<dbReference type="Reactome" id="R-HSA-1538133">
    <property type="pathway name" value="G0 and Early G1"/>
</dbReference>
<dbReference type="Reactome" id="R-HSA-193670">
    <property type="pathway name" value="p75NTR negatively regulates cell cycle via SC1"/>
</dbReference>
<dbReference type="Reactome" id="R-HSA-201722">
    <property type="pathway name" value="Formation of the beta-catenin:TCF transactivating complex"/>
</dbReference>
<dbReference type="Reactome" id="R-HSA-2122947">
    <property type="pathway name" value="NOTCH1 Intracellular Domain Regulates Transcription"/>
</dbReference>
<dbReference type="Reactome" id="R-HSA-2173795">
    <property type="pathway name" value="Downregulation of SMAD2/3:SMAD4 transcriptional activity"/>
</dbReference>
<dbReference type="Reactome" id="R-HSA-2173796">
    <property type="pathway name" value="SMAD2/SMAD3:SMAD4 heterotrimer regulates transcription"/>
</dbReference>
<dbReference type="Reactome" id="R-HSA-2644606">
    <property type="pathway name" value="Constitutive Signaling by NOTCH1 PEST Domain Mutants"/>
</dbReference>
<dbReference type="Reactome" id="R-HSA-2894862">
    <property type="pathway name" value="Constitutive Signaling by NOTCH1 HD+PEST Domain Mutants"/>
</dbReference>
<dbReference type="Reactome" id="R-HSA-3214815">
    <property type="pathway name" value="HDACs deacetylate histones"/>
</dbReference>
<dbReference type="Reactome" id="R-HSA-350054">
    <property type="pathway name" value="Notch-HLH transcription pathway"/>
</dbReference>
<dbReference type="Reactome" id="R-HSA-3769402">
    <property type="pathway name" value="Deactivation of the beta-catenin transactivating complex"/>
</dbReference>
<dbReference type="Reactome" id="R-HSA-427389">
    <property type="pathway name" value="ERCC6 (CSB) and EHMT2 (G9a) positively regulate rRNA expression"/>
</dbReference>
<dbReference type="Reactome" id="R-HSA-427413">
    <property type="pathway name" value="NoRC negatively regulates rRNA expression"/>
</dbReference>
<dbReference type="Reactome" id="R-HSA-4551638">
    <property type="pathway name" value="SUMOylation of chromatin organization proteins"/>
</dbReference>
<dbReference type="Reactome" id="R-HSA-4641265">
    <property type="pathway name" value="Repression of WNT target genes"/>
</dbReference>
<dbReference type="Reactome" id="R-HSA-6804758">
    <property type="pathway name" value="Regulation of TP53 Activity through Acetylation"/>
</dbReference>
<dbReference type="Reactome" id="R-HSA-69205">
    <property type="pathway name" value="G1/S-Specific Transcription"/>
</dbReference>
<dbReference type="Reactome" id="R-HSA-73762">
    <property type="pathway name" value="RNA Polymerase I Transcription Initiation"/>
</dbReference>
<dbReference type="Reactome" id="R-HSA-8936459">
    <property type="pathway name" value="RUNX1 regulates genes involved in megakaryocyte differentiation and platelet function"/>
</dbReference>
<dbReference type="Reactome" id="R-HSA-8943724">
    <property type="pathway name" value="Regulation of PTEN gene transcription"/>
</dbReference>
<dbReference type="Reactome" id="R-HSA-9018519">
    <property type="pathway name" value="Estrogen-dependent gene expression"/>
</dbReference>
<dbReference type="Reactome" id="R-HSA-9022538">
    <property type="pathway name" value="Loss of MECP2 binding ability to 5mC-DNA"/>
</dbReference>
<dbReference type="Reactome" id="R-HSA-9022692">
    <property type="pathway name" value="Regulation of MECP2 expression and activity"/>
</dbReference>
<dbReference type="Reactome" id="R-HSA-9022699">
    <property type="pathway name" value="MECP2 regulates neuronal receptors and channels"/>
</dbReference>
<dbReference type="Reactome" id="R-HSA-9022702">
    <property type="pathway name" value="MECP2 regulates transcription of neuronal ligands"/>
</dbReference>
<dbReference type="Reactome" id="R-HSA-9615017">
    <property type="pathway name" value="FOXO-mediated transcription of oxidative stress, metabolic and neuronal genes"/>
</dbReference>
<dbReference type="Reactome" id="R-HSA-9679191">
    <property type="pathway name" value="Potential therapeutics for SARS"/>
</dbReference>
<dbReference type="Reactome" id="R-HSA-9701898">
    <property type="pathway name" value="STAT3 nuclear events downstream of ALK signaling"/>
</dbReference>
<dbReference type="Reactome" id="R-HSA-9725371">
    <property type="pathway name" value="Nuclear events stimulated by ALK signaling in cancer"/>
</dbReference>
<dbReference type="Reactome" id="R-HSA-9824594">
    <property type="pathway name" value="Regulation of MITF-M-dependent genes involved in apoptosis"/>
</dbReference>
<dbReference type="Reactome" id="R-HSA-9825892">
    <property type="pathway name" value="Regulation of MITF-M-dependent genes involved in cell cycle and proliferation"/>
</dbReference>
<dbReference type="Reactome" id="R-HSA-983231">
    <property type="pathway name" value="Factors involved in megakaryocyte development and platelet production"/>
</dbReference>
<dbReference type="Reactome" id="R-HSA-9843940">
    <property type="pathway name" value="Regulation of endogenous retroelements by KRAB-ZFP proteins"/>
</dbReference>
<dbReference type="Reactome" id="R-HSA-9844594">
    <property type="pathway name" value="Transcriptional regulation of brown and beige adipocyte differentiation by EBF2"/>
</dbReference>
<dbReference type="Reactome" id="R-HSA-9845323">
    <property type="pathway name" value="Regulation of endogenous retroelements by Piwi-interacting RNAs (piRNAs)"/>
</dbReference>
<dbReference type="Reactome" id="R-HSA-9856649">
    <property type="pathway name" value="Transcriptional and post-translational regulation of MITF-M expression and activity"/>
</dbReference>
<dbReference type="SABIO-RK" id="Q13547"/>
<dbReference type="SignaLink" id="Q13547"/>
<dbReference type="SIGNOR" id="Q13547"/>
<dbReference type="BioGRID-ORCS" id="3065">
    <property type="hits" value="46 hits in 1189 CRISPR screens"/>
</dbReference>
<dbReference type="CD-CODE" id="8C2F96ED">
    <property type="entry name" value="Centrosome"/>
</dbReference>
<dbReference type="CD-CODE" id="91857CE7">
    <property type="entry name" value="Nucleolus"/>
</dbReference>
<dbReference type="CD-CODE" id="A0DCDA94">
    <property type="entry name" value="DNA damage foci"/>
</dbReference>
<dbReference type="ChiTaRS" id="HDAC1">
    <property type="organism name" value="human"/>
</dbReference>
<dbReference type="EvolutionaryTrace" id="Q13547"/>
<dbReference type="GeneWiki" id="HDAC1"/>
<dbReference type="GenomeRNAi" id="3065"/>
<dbReference type="Pharos" id="Q13547">
    <property type="development level" value="Tclin"/>
</dbReference>
<dbReference type="PRO" id="PR:Q13547"/>
<dbReference type="Proteomes" id="UP000005640">
    <property type="component" value="Chromosome 1"/>
</dbReference>
<dbReference type="RNAct" id="Q13547">
    <property type="molecule type" value="protein"/>
</dbReference>
<dbReference type="Bgee" id="ENSG00000116478">
    <property type="expression patterns" value="Expressed in colonic mucosa and 211 other cell types or tissues"/>
</dbReference>
<dbReference type="ExpressionAtlas" id="Q13547">
    <property type="expression patterns" value="baseline and differential"/>
</dbReference>
<dbReference type="GO" id="GO:0000785">
    <property type="term" value="C:chromatin"/>
    <property type="evidence" value="ECO:0000314"/>
    <property type="project" value="ParkinsonsUK-UCL"/>
</dbReference>
<dbReference type="GO" id="GO:0005737">
    <property type="term" value="C:cytoplasm"/>
    <property type="evidence" value="ECO:0000304"/>
    <property type="project" value="UniProtKB"/>
</dbReference>
<dbReference type="GO" id="GO:0005829">
    <property type="term" value="C:cytosol"/>
    <property type="evidence" value="ECO:0000314"/>
    <property type="project" value="UniProtKB"/>
</dbReference>
<dbReference type="GO" id="GO:0000792">
    <property type="term" value="C:heterochromatin"/>
    <property type="evidence" value="ECO:0007669"/>
    <property type="project" value="Ensembl"/>
</dbReference>
<dbReference type="GO" id="GO:0000118">
    <property type="term" value="C:histone deacetylase complex"/>
    <property type="evidence" value="ECO:0000314"/>
    <property type="project" value="UniProtKB"/>
</dbReference>
<dbReference type="GO" id="GO:0043025">
    <property type="term" value="C:neuronal cell body"/>
    <property type="evidence" value="ECO:0007669"/>
    <property type="project" value="Ensembl"/>
</dbReference>
<dbReference type="GO" id="GO:0005654">
    <property type="term" value="C:nucleoplasm"/>
    <property type="evidence" value="ECO:0000314"/>
    <property type="project" value="UniProtKB"/>
</dbReference>
<dbReference type="GO" id="GO:0005634">
    <property type="term" value="C:nucleus"/>
    <property type="evidence" value="ECO:0000314"/>
    <property type="project" value="UniProtKB"/>
</dbReference>
<dbReference type="GO" id="GO:0016581">
    <property type="term" value="C:NuRD complex"/>
    <property type="evidence" value="ECO:0000314"/>
    <property type="project" value="UniProtKB"/>
</dbReference>
<dbReference type="GO" id="GO:0032991">
    <property type="term" value="C:protein-containing complex"/>
    <property type="evidence" value="ECO:0000314"/>
    <property type="project" value="UniProtKB"/>
</dbReference>
<dbReference type="GO" id="GO:0070822">
    <property type="term" value="C:Sin3-type complex"/>
    <property type="evidence" value="ECO:0000314"/>
    <property type="project" value="BHF-UCL"/>
</dbReference>
<dbReference type="GO" id="GO:0017053">
    <property type="term" value="C:transcription repressor complex"/>
    <property type="evidence" value="ECO:0007669"/>
    <property type="project" value="Ensembl"/>
</dbReference>
<dbReference type="GO" id="GO:0001046">
    <property type="term" value="F:core promoter sequence-specific DNA binding"/>
    <property type="evidence" value="ECO:0000314"/>
    <property type="project" value="CAFA"/>
</dbReference>
<dbReference type="GO" id="GO:0140297">
    <property type="term" value="F:DNA-binding transcription factor binding"/>
    <property type="evidence" value="ECO:0000353"/>
    <property type="project" value="UniProtKB"/>
</dbReference>
<dbReference type="GO" id="GO:0070888">
    <property type="term" value="F:E-box binding"/>
    <property type="evidence" value="ECO:0007669"/>
    <property type="project" value="Ensembl"/>
</dbReference>
<dbReference type="GO" id="GO:0019899">
    <property type="term" value="F:enzyme binding"/>
    <property type="evidence" value="ECO:0000353"/>
    <property type="project" value="UniProtKB"/>
</dbReference>
<dbReference type="GO" id="GO:0004407">
    <property type="term" value="F:histone deacetylase activity"/>
    <property type="evidence" value="ECO:0000314"/>
    <property type="project" value="UniProtKB"/>
</dbReference>
<dbReference type="GO" id="GO:0141221">
    <property type="term" value="F:histone deacetylase activity, hydrolytic mechanism"/>
    <property type="evidence" value="ECO:0007669"/>
    <property type="project" value="UniProtKB-EC"/>
</dbReference>
<dbReference type="GO" id="GO:0042826">
    <property type="term" value="F:histone deacetylase binding"/>
    <property type="evidence" value="ECO:0000353"/>
    <property type="project" value="UniProtKB"/>
</dbReference>
<dbReference type="GO" id="GO:0160009">
    <property type="term" value="F:histone decrotonylase activity"/>
    <property type="evidence" value="ECO:0000314"/>
    <property type="project" value="UniProtKB"/>
</dbReference>
<dbReference type="GO" id="GO:0035851">
    <property type="term" value="F:Krueppel-associated box domain binding"/>
    <property type="evidence" value="ECO:0007669"/>
    <property type="project" value="Ensembl"/>
</dbReference>
<dbReference type="GO" id="GO:0046872">
    <property type="term" value="F:metal ion binding"/>
    <property type="evidence" value="ECO:0007669"/>
    <property type="project" value="UniProtKB-KW"/>
</dbReference>
<dbReference type="GO" id="GO:0051059">
    <property type="term" value="F:NF-kappaB binding"/>
    <property type="evidence" value="ECO:0000353"/>
    <property type="project" value="UniProtKB"/>
</dbReference>
<dbReference type="GO" id="GO:0002039">
    <property type="term" value="F:p53 binding"/>
    <property type="evidence" value="ECO:0000353"/>
    <property type="project" value="CAFA"/>
</dbReference>
<dbReference type="GO" id="GO:1990841">
    <property type="term" value="F:promoter-specific chromatin binding"/>
    <property type="evidence" value="ECO:0007669"/>
    <property type="project" value="Ensembl"/>
</dbReference>
<dbReference type="GO" id="GO:0033558">
    <property type="term" value="F:protein lysine deacetylase activity"/>
    <property type="evidence" value="ECO:0000314"/>
    <property type="project" value="UniProtKB"/>
</dbReference>
<dbReference type="GO" id="GO:0160216">
    <property type="term" value="F:protein lysine delactylase activity"/>
    <property type="evidence" value="ECO:0000314"/>
    <property type="project" value="UniProtKB"/>
</dbReference>
<dbReference type="GO" id="GO:0000978">
    <property type="term" value="F:RNA polymerase II cis-regulatory region sequence-specific DNA binding"/>
    <property type="evidence" value="ECO:0000316"/>
    <property type="project" value="UniProtKB"/>
</dbReference>
<dbReference type="GO" id="GO:0000979">
    <property type="term" value="F:RNA polymerase II core promoter sequence-specific DNA binding"/>
    <property type="evidence" value="ECO:0000314"/>
    <property type="project" value="ARUK-UCL"/>
</dbReference>
<dbReference type="GO" id="GO:0061629">
    <property type="term" value="F:RNA polymerase II-specific DNA-binding transcription factor binding"/>
    <property type="evidence" value="ECO:0000353"/>
    <property type="project" value="BHF-UCL"/>
</dbReference>
<dbReference type="GO" id="GO:0003714">
    <property type="term" value="F:transcription corepressor activity"/>
    <property type="evidence" value="ECO:0000314"/>
    <property type="project" value="UniProtKB"/>
</dbReference>
<dbReference type="GO" id="GO:0001222">
    <property type="term" value="F:transcription corepressor binding"/>
    <property type="evidence" value="ECO:0000353"/>
    <property type="project" value="UniProtKB"/>
</dbReference>
<dbReference type="GO" id="GO:0036120">
    <property type="term" value="P:cellular response to platelet-derived growth factor stimulus"/>
    <property type="evidence" value="ECO:0000250"/>
    <property type="project" value="BHF-UCL"/>
</dbReference>
<dbReference type="GO" id="GO:0006325">
    <property type="term" value="P:chromatin organization"/>
    <property type="evidence" value="ECO:0000304"/>
    <property type="project" value="UniProtKB"/>
</dbReference>
<dbReference type="GO" id="GO:0006338">
    <property type="term" value="P:chromatin remodeling"/>
    <property type="evidence" value="ECO:0000314"/>
    <property type="project" value="ComplexPortal"/>
</dbReference>
<dbReference type="GO" id="GO:0032922">
    <property type="term" value="P:circadian regulation of gene expression"/>
    <property type="evidence" value="ECO:0000250"/>
    <property type="project" value="UniProtKB"/>
</dbReference>
<dbReference type="GO" id="GO:0006346">
    <property type="term" value="P:DNA methylation-dependent constitutive heterochromatin formation"/>
    <property type="evidence" value="ECO:0000316"/>
    <property type="project" value="BHF-UCL"/>
</dbReference>
<dbReference type="GO" id="GO:0042733">
    <property type="term" value="P:embryonic digit morphogenesis"/>
    <property type="evidence" value="ECO:0000250"/>
    <property type="project" value="BHF-UCL"/>
</dbReference>
<dbReference type="GO" id="GO:0007492">
    <property type="term" value="P:endoderm development"/>
    <property type="evidence" value="ECO:0007669"/>
    <property type="project" value="Ensembl"/>
</dbReference>
<dbReference type="GO" id="GO:0009913">
    <property type="term" value="P:epidermal cell differentiation"/>
    <property type="evidence" value="ECO:0000250"/>
    <property type="project" value="BHF-UCL"/>
</dbReference>
<dbReference type="GO" id="GO:0061029">
    <property type="term" value="P:eyelid development in camera-type eye"/>
    <property type="evidence" value="ECO:0000250"/>
    <property type="project" value="BHF-UCL"/>
</dbReference>
<dbReference type="GO" id="GO:0061198">
    <property type="term" value="P:fungiform papilla formation"/>
    <property type="evidence" value="ECO:0000250"/>
    <property type="project" value="BHF-UCL"/>
</dbReference>
<dbReference type="GO" id="GO:0060789">
    <property type="term" value="P:hair follicle placode formation"/>
    <property type="evidence" value="ECO:0000250"/>
    <property type="project" value="BHF-UCL"/>
</dbReference>
<dbReference type="GO" id="GO:0031507">
    <property type="term" value="P:heterochromatin formation"/>
    <property type="evidence" value="ECO:0000318"/>
    <property type="project" value="GO_Central"/>
</dbReference>
<dbReference type="GO" id="GO:0021766">
    <property type="term" value="P:hippocampus development"/>
    <property type="evidence" value="ECO:0007669"/>
    <property type="project" value="Ensembl"/>
</dbReference>
<dbReference type="GO" id="GO:0043922">
    <property type="term" value="P:negative regulation by host of viral transcription"/>
    <property type="evidence" value="ECO:0000315"/>
    <property type="project" value="UniProtKB"/>
</dbReference>
<dbReference type="GO" id="GO:0060766">
    <property type="term" value="P:negative regulation of androgen receptor signaling pathway"/>
    <property type="evidence" value="ECO:0000314"/>
    <property type="project" value="BHF-UCL"/>
</dbReference>
<dbReference type="GO" id="GO:0043066">
    <property type="term" value="P:negative regulation of apoptotic process"/>
    <property type="evidence" value="ECO:0000250"/>
    <property type="project" value="BHF-UCL"/>
</dbReference>
<dbReference type="GO" id="GO:0043124">
    <property type="term" value="P:negative regulation of canonical NF-kappaB signal transduction"/>
    <property type="evidence" value="ECO:0007669"/>
    <property type="project" value="Ensembl"/>
</dbReference>
<dbReference type="GO" id="GO:0090090">
    <property type="term" value="P:negative regulation of canonical Wnt signaling pathway"/>
    <property type="evidence" value="ECO:0000316"/>
    <property type="project" value="ParkinsonsUK-UCL"/>
</dbReference>
<dbReference type="GO" id="GO:0030336">
    <property type="term" value="P:negative regulation of cell migration"/>
    <property type="evidence" value="ECO:0000303"/>
    <property type="project" value="ComplexPortal"/>
</dbReference>
<dbReference type="GO" id="GO:0045892">
    <property type="term" value="P:negative regulation of DNA-templated transcription"/>
    <property type="evidence" value="ECO:0000315"/>
    <property type="project" value="UniProtKB"/>
</dbReference>
<dbReference type="GO" id="GO:0010629">
    <property type="term" value="P:negative regulation of gene expression"/>
    <property type="evidence" value="ECO:0000315"/>
    <property type="project" value="CACAO"/>
</dbReference>
<dbReference type="GO" id="GO:0045814">
    <property type="term" value="P:negative regulation of gene expression, epigenetic"/>
    <property type="evidence" value="ECO:0000315"/>
    <property type="project" value="ARUK-UCL"/>
</dbReference>
<dbReference type="GO" id="GO:2001243">
    <property type="term" value="P:negative regulation of intrinsic apoptotic signaling pathway"/>
    <property type="evidence" value="ECO:0007669"/>
    <property type="project" value="Ensembl"/>
</dbReference>
<dbReference type="GO" id="GO:1902455">
    <property type="term" value="P:negative regulation of stem cell population maintenance"/>
    <property type="evidence" value="ECO:0000303"/>
    <property type="project" value="ComplexPortal"/>
</dbReference>
<dbReference type="GO" id="GO:0000122">
    <property type="term" value="P:negative regulation of transcription by RNA polymerase II"/>
    <property type="evidence" value="ECO:0000314"/>
    <property type="project" value="UniProtKB"/>
</dbReference>
<dbReference type="GO" id="GO:0030512">
    <property type="term" value="P:negative regulation of transforming growth factor beta receptor signaling pathway"/>
    <property type="evidence" value="ECO:0000303"/>
    <property type="project" value="ComplexPortal"/>
</dbReference>
<dbReference type="GO" id="GO:0030182">
    <property type="term" value="P:neuron differentiation"/>
    <property type="evidence" value="ECO:0007669"/>
    <property type="project" value="Ensembl"/>
</dbReference>
<dbReference type="GO" id="GO:0042475">
    <property type="term" value="P:odontogenesis of dentin-containing tooth"/>
    <property type="evidence" value="ECO:0000250"/>
    <property type="project" value="BHF-UCL"/>
</dbReference>
<dbReference type="GO" id="GO:0048709">
    <property type="term" value="P:oligodendrocyte differentiation"/>
    <property type="evidence" value="ECO:0007669"/>
    <property type="project" value="Ensembl"/>
</dbReference>
<dbReference type="GO" id="GO:0008284">
    <property type="term" value="P:positive regulation of cell population proliferation"/>
    <property type="evidence" value="ECO:0000315"/>
    <property type="project" value="BHF-UCL"/>
</dbReference>
<dbReference type="GO" id="GO:0045893">
    <property type="term" value="P:positive regulation of DNA-templated transcription"/>
    <property type="evidence" value="ECO:0000314"/>
    <property type="project" value="BHF-UCL"/>
</dbReference>
<dbReference type="GO" id="GO:0010628">
    <property type="term" value="P:positive regulation of gene expression"/>
    <property type="evidence" value="ECO:0000250"/>
    <property type="project" value="BHF-UCL"/>
</dbReference>
<dbReference type="GO" id="GO:0033148">
    <property type="term" value="P:positive regulation of intracellular estrogen receptor signaling pathway"/>
    <property type="evidence" value="ECO:0000315"/>
    <property type="project" value="BHF-UCL"/>
</dbReference>
<dbReference type="GO" id="GO:0048714">
    <property type="term" value="P:positive regulation of oligodendrocyte differentiation"/>
    <property type="evidence" value="ECO:0007669"/>
    <property type="project" value="Ensembl"/>
</dbReference>
<dbReference type="GO" id="GO:0048661">
    <property type="term" value="P:positive regulation of smooth muscle cell proliferation"/>
    <property type="evidence" value="ECO:0000250"/>
    <property type="project" value="BHF-UCL"/>
</dbReference>
<dbReference type="GO" id="GO:1902459">
    <property type="term" value="P:positive regulation of stem cell population maintenance"/>
    <property type="evidence" value="ECO:0000303"/>
    <property type="project" value="ComplexPortal"/>
</dbReference>
<dbReference type="GO" id="GO:0045944">
    <property type="term" value="P:positive regulation of transcription by RNA polymerase II"/>
    <property type="evidence" value="ECO:0000314"/>
    <property type="project" value="BHF-UCL"/>
</dbReference>
<dbReference type="GO" id="GO:0006476">
    <property type="term" value="P:protein deacetylation"/>
    <property type="evidence" value="ECO:0000314"/>
    <property type="project" value="CAFA"/>
</dbReference>
<dbReference type="GO" id="GO:0042659">
    <property type="term" value="P:regulation of cell fate specification"/>
    <property type="evidence" value="ECO:0000303"/>
    <property type="project" value="ComplexPortal"/>
</dbReference>
<dbReference type="GO" id="GO:2000736">
    <property type="term" value="P:regulation of stem cell differentiation"/>
    <property type="evidence" value="ECO:0000303"/>
    <property type="project" value="ComplexPortal"/>
</dbReference>
<dbReference type="GO" id="GO:0006357">
    <property type="term" value="P:regulation of transcription by RNA polymerase II"/>
    <property type="evidence" value="ECO:0000316"/>
    <property type="project" value="ARUK-UCL"/>
</dbReference>
<dbReference type="CDD" id="cd10010">
    <property type="entry name" value="HDAC1"/>
    <property type="match status" value="1"/>
</dbReference>
<dbReference type="DisProt" id="DP02233"/>
<dbReference type="FunFam" id="3.40.800.20:FF:000003">
    <property type="entry name" value="Histone deacetylase"/>
    <property type="match status" value="1"/>
</dbReference>
<dbReference type="Gene3D" id="3.40.800.20">
    <property type="entry name" value="Histone deacetylase domain"/>
    <property type="match status" value="1"/>
</dbReference>
<dbReference type="IDEAL" id="IID00565"/>
<dbReference type="InterPro" id="IPR050284">
    <property type="entry name" value="HDAC_PDAC"/>
</dbReference>
<dbReference type="InterPro" id="IPR000286">
    <property type="entry name" value="His_deacetylse"/>
</dbReference>
<dbReference type="InterPro" id="IPR003084">
    <property type="entry name" value="His_deacetylse_1"/>
</dbReference>
<dbReference type="InterPro" id="IPR023801">
    <property type="entry name" value="His_deacetylse_dom"/>
</dbReference>
<dbReference type="InterPro" id="IPR037138">
    <property type="entry name" value="His_deacetylse_dom_sf"/>
</dbReference>
<dbReference type="InterPro" id="IPR023696">
    <property type="entry name" value="Ureohydrolase_dom_sf"/>
</dbReference>
<dbReference type="PANTHER" id="PTHR10625:SF49">
    <property type="entry name" value="HISTONE DEACETYLASE 1"/>
    <property type="match status" value="1"/>
</dbReference>
<dbReference type="PANTHER" id="PTHR10625">
    <property type="entry name" value="HISTONE DEACETYLASE HDAC1-RELATED"/>
    <property type="match status" value="1"/>
</dbReference>
<dbReference type="Pfam" id="PF00850">
    <property type="entry name" value="Hist_deacetyl"/>
    <property type="match status" value="1"/>
</dbReference>
<dbReference type="PIRSF" id="PIRSF037913">
    <property type="entry name" value="His_deacetylse_1"/>
    <property type="match status" value="1"/>
</dbReference>
<dbReference type="PRINTS" id="PR01270">
    <property type="entry name" value="HDASUPER"/>
</dbReference>
<dbReference type="PRINTS" id="PR01271">
    <property type="entry name" value="HISDACETLASE"/>
</dbReference>
<dbReference type="SUPFAM" id="SSF52768">
    <property type="entry name" value="Arginase/deacetylase"/>
    <property type="match status" value="1"/>
</dbReference>
<sequence>MAQTQGTRRKVCYYYDGDVGNYYYGQGHPMKPHRIRMTHNLLLNYGLYRKMEIYRPHKANAEEMTKYHSDDYIKFLRSIRPDNMSEYSKQMQRFNVGEDCPVFDGLFEFCQLSTGGSVASAVKLNKQQTDIAVNWAGGLHHAKKSEASGFCYVNDIVLAILELLKYHQRVLYIDIDIHHGDGVEEAFYTTDRVMTVSFHKYGEYFPGTGDLRDIGAGKGKYYAVNYPLRDGIDDESYEAIFKPVMSKVMEMFQPSAVVLQCGSDSLSGDRLGCFNLTIKGHAKCVEFVKSFNLPMLMLGGGGYTIRNVARCWTYETAVALDTEIPNELPYNDYFEYFGPDFKLHISPSNMTNQNTNEYLEKIKQRLFENLRMLPHAPGVQMQAIPEDAIPEESGDEDEDDPDKRISICSSDKRIACEEEFSDSEEEGEGGRKNSSNFKKAKRVKTEDEKEKDPEEKKEVTEEEKTKEEKPEAKGVKEEVKLA</sequence>
<protein>
    <recommendedName>
        <fullName evidence="80">Histone deacetylase 1</fullName>
        <shortName>HD1</shortName>
        <ecNumber evidence="37 69">3.5.1.98</ecNumber>
    </recommendedName>
    <alternativeName>
        <fullName>Protein deacetylase HDAC1</fullName>
        <ecNumber evidence="33 81 82 83">3.5.1.-</ecNumber>
    </alternativeName>
    <alternativeName>
        <fullName>Protein deacylase HDAC1</fullName>
        <ecNumber evidence="69 75">3.5.1.-</ecNumber>
    </alternativeName>
</protein>
<comment type="function">
    <text evidence="1 24 33 34 35 37 39 44 47 53 55 61 69 70 75">Histone deacetylase that catalyzes the deacetylation of lysine residues on the N-terminal part of the core histones (H2A, H2B, H3 and H4) (PubMed:16762839, PubMed:17704056, PubMed:28497810). Histone deacetylation gives a tag for epigenetic repression and plays an important role in transcriptional regulation, cell cycle progression and developmental events (PubMed:16762839, PubMed:17704056). Histone deacetylases act via the formation of large multiprotein complexes (PubMed:16762839, PubMed:17704056). Acts as a component of the histone deacetylase NuRD complex which participates in the remodeling of chromatin (PubMed:16428440, PubMed:28977666). As part of the SIN3B complex is recruited downstream of the constitutively active genes transcriptional start sites through interaction with histones and mitigates histone acetylation and RNA polymerase II progression within transcribed regions contributing to the regulation of transcription (PubMed:21041482). Also functions as a deacetylase for non-histone targets, such as NR1D2, RELA, SP1, SP3, STAT3 and TSHZ3 (PubMed:12837748, PubMed:16285960, PubMed:16478997, PubMed:17996965, PubMed:19343227). Deacetylates SP proteins, SP1 and SP3, and regulates their function (PubMed:12837748, PubMed:16478997). Component of the BRG1-RB1-HDAC1 complex, which negatively regulates the CREST-mediated transcription in resting neurons (PubMed:19081374). Upon calcium stimulation, HDAC1 is released from the complex and CREBBP is recruited, which facilitates transcriptional activation (PubMed:19081374). Deacetylates TSHZ3 and regulates its transcriptional repressor activity (PubMed:19343227). Deacetylates 'Lys-310' in RELA and thereby inhibits the transcriptional activity of NF-kappa-B (PubMed:17000776). Deacetylates NR1D2 and abrogates the effect of KAT5-mediated relieving of NR1D2 transcription repression activity (PubMed:17996965). Component of a RCOR/GFI/KDM1A/HDAC complex that suppresses, via histone deacetylase (HDAC) recruitment, a number of genes implicated in multilineage blood cell development (By similarity). Involved in CIART-mediated transcriptional repression of the circadian transcriptional activator: CLOCK-BMAL1 heterodimer (By similarity). Required for the transcriptional repression of circadian target genes, such as PER1, mediated by the large PER complex or CRY1 through histone deacetylation (By similarity). In addition to protein deacetylase activity, also has protein-lysine deacylase activity: acts as a protein decrotonylase and delactylase by mediating decrotonylation ((2E)-butenoyl) and delactylation (lactoyl) of histones, respectively (PubMed:28497810, PubMed:35044827).</text>
</comment>
<comment type="catalytic activity">
    <reaction evidence="37 69">
        <text>N(6)-acetyl-L-lysyl-[histone] + H2O = L-lysyl-[histone] + acetate</text>
        <dbReference type="Rhea" id="RHEA:58196"/>
        <dbReference type="Rhea" id="RHEA-COMP:9845"/>
        <dbReference type="Rhea" id="RHEA-COMP:11338"/>
        <dbReference type="ChEBI" id="CHEBI:15377"/>
        <dbReference type="ChEBI" id="CHEBI:29969"/>
        <dbReference type="ChEBI" id="CHEBI:30089"/>
        <dbReference type="ChEBI" id="CHEBI:61930"/>
        <dbReference type="EC" id="3.5.1.98"/>
    </reaction>
    <physiologicalReaction direction="left-to-right" evidence="37 69">
        <dbReference type="Rhea" id="RHEA:58197"/>
    </physiologicalReaction>
</comment>
<comment type="catalytic activity">
    <reaction evidence="33 81 82 83">
        <text>N(6)-acetyl-L-lysyl-[protein] + H2O = L-lysyl-[protein] + acetate</text>
        <dbReference type="Rhea" id="RHEA:58108"/>
        <dbReference type="Rhea" id="RHEA-COMP:9752"/>
        <dbReference type="Rhea" id="RHEA-COMP:10731"/>
        <dbReference type="ChEBI" id="CHEBI:15377"/>
        <dbReference type="ChEBI" id="CHEBI:29969"/>
        <dbReference type="ChEBI" id="CHEBI:30089"/>
        <dbReference type="ChEBI" id="CHEBI:61930"/>
    </reaction>
    <physiologicalReaction direction="left-to-right" evidence="33 81 82 83">
        <dbReference type="Rhea" id="RHEA:58109"/>
    </physiologicalReaction>
</comment>
<comment type="catalytic activity">
    <reaction evidence="69">
        <text>N(6)-(2E)-butenoyl-L-lysyl-[protein] + H2O = (2E)-2-butenoate + L-lysyl-[protein]</text>
        <dbReference type="Rhea" id="RHEA:69172"/>
        <dbReference type="Rhea" id="RHEA-COMP:9752"/>
        <dbReference type="Rhea" id="RHEA-COMP:13707"/>
        <dbReference type="ChEBI" id="CHEBI:15377"/>
        <dbReference type="ChEBI" id="CHEBI:29969"/>
        <dbReference type="ChEBI" id="CHEBI:35899"/>
        <dbReference type="ChEBI" id="CHEBI:137954"/>
    </reaction>
    <physiologicalReaction direction="left-to-right" evidence="69">
        <dbReference type="Rhea" id="RHEA:69173"/>
    </physiologicalReaction>
</comment>
<comment type="catalytic activity">
    <reaction evidence="75">
        <text>N(6)-[(S)-lactoyl]-L-lysyl-[protein] + H2O = (S)-lactate + L-lysyl-[protein]</text>
        <dbReference type="Rhea" id="RHEA:81387"/>
        <dbReference type="Rhea" id="RHEA-COMP:9752"/>
        <dbReference type="Rhea" id="RHEA-COMP:19466"/>
        <dbReference type="ChEBI" id="CHEBI:15377"/>
        <dbReference type="ChEBI" id="CHEBI:16651"/>
        <dbReference type="ChEBI" id="CHEBI:29969"/>
        <dbReference type="ChEBI" id="CHEBI:231527"/>
    </reaction>
    <physiologicalReaction direction="left-to-right" evidence="75">
        <dbReference type="Rhea" id="RHEA:81388"/>
    </physiologicalReaction>
</comment>
<comment type="cofactor">
    <cofactor evidence="2">
        <name>Zn(2+)</name>
        <dbReference type="ChEBI" id="CHEBI:29105"/>
    </cofactor>
</comment>
<comment type="activity regulation">
    <text evidence="2">Inositol tetraphosphate (1D-myo-inositol 1,4,5,6-tetrakisphosphate) may act as an intermolecular glue between HDAC1 and N-Cor repressor complex components.</text>
</comment>
<comment type="subunit">
    <text evidence="1 6 7 8 9 10 11 12 13 14 15 19 20 21 22 23 24 25 27 28 29 30 31 32 34 35 36 38 39 41 42 43 44 45 46 47 48 49 51 52 53 54 55 56 57 59 60 61 62 63 64 65 66 67 68 70 71 72 73 74 76 77">Part of the core histone deacetylase (HDAC) complex composed of HDAC1, HDAC2, RBBP4 and RBBP7, the core complex associates with SIN3, SAP18 and SAP30 to form the SIN3 HDAC complex (PubMed:12493763, PubMed:12724404, PubMed:19061646). Component of the nucleosome remodeling and deacetylase (NuRD) repressor complex, composed of core proteins MTA1, MTA2, MTA3, RBBP4, RBBP7, HDAC1, HDAC2, MBD2, MBD3, and peripherally associated proteins CDK2AP1, CDK2AP2, GATAD2A, GATAD2B, CHD3, CHD4 and CHD5 (PubMed:11102443, PubMed:16428440, PubMed:28977666, PubMed:33283408). The exact stoichiometry of the NuRD complex is unknown, and some subunits such as MBD2 and MBD3, GATAD2A and GATAD2B, and CHD3, CHD4 and CHD5 define mutually exclusive NuRD complexes (PubMed:16428440, PubMed:28977666, PubMed:33283408). Component of a BHC histone deacetylase complex that contains HDAC1, HDAC2, HMG20B/BRAF35, KDM1A, RCOR1/CoREST and PHF21A/BHC80 (PubMed:12493763). The BHC complex may also contain ZMYM2, ZNF217, ZMYM3, GSE1 and GTF2I (PubMed:12493763). Component of a mSin3A corepressor complex that contains SIN3A, SAP130, SUDS3/SAP45, ARID4B/SAP180, HDAC1 and HDAC2 (PubMed:12724404). Component of the SIN3B complex, which includes SIN3B, HDAC1, PHF12 and MORF4L1 (PubMed:21041482). Found in a trimeric complex with APBB1 and TSHZ3; the interaction between HDAC1 and APBB1 is mediated by TSHZ3 (PubMed:19343227). Forms a complex comprising APPL1, RUVBL2, APPL2, CTNNB1 and HDAC2 (PubMed:19433865). Component of a RCOR/GFI/KDM1A/HDAC complex (By similarity). Part of a complex composed of TRIM28, HDAC1, HDAC2 and EHMT2 (PubMed:17704056). Part of a complex containing at least CDYL, MIER1, MIER2, HDAC1 and HDAC2 (PubMed:19061646). The large PER complex involved in the histone deacetylation is composed of at least HDAC1, PER2, SFPQ and SIN3A (By similarity). Associates with the 9-1-1 complex; interacts with HUS1 (PubMed:10846170). Found in a complex with DNMT3A and HDAC7 (By similarity). Found in a complex with YY1, SIN3A and GON4L (By similarity). Identified in a histone deacetylase complex that contains DNTTIP1, HDAC1 and MIDEAS; this complex assembles into a tetramer that contains four copies of each protein chain (PubMed:25653165). Found in a complex composed of at least SINHCAF, SIN3A, HDAC1, SAP30, RBBP4, OGT and TET1 (By similarity). Interacts with GFI1; the interaction is direct (By similarity). Interacts directly with GFI1B (By similarity). Interacts with TSHZ3 (via N-terminus); the interaction is direct (PubMed:19343227). Interacts with APEX1; the interaction is not dependent on the acetylated status of APEX1 (PubMed:14633989). Interacts with BANP (PubMed:16166625). Interacts with BAZ2A/TIP5 (By similarity). Interacts with BCL6 (PubMed:15454082). Interacts with BCOR (PubMed:10898795). Interacts with BHLHE40/DEC1 (PubMed:21829689). Interacts with BRCC3; this interaction is enhanced in the presence of PWWP2B (By similarity). Interacts with BRMS1 (PubMed:17000776). Interacts with BRMS1L (PubMed:15451426). Interacts with C10orf90/FATS (via its N-terminal); the interaction prevents binding of HDAC1 to CDKN1A/p21 and facilitates the acetylation and stabilization of CDKN1A/p21 (By similarity). Interacts with CBFA2T3 (PubMed:11533236). Interacts with CCAR2 (PubMed:21030595). Interacts with CDK2AP1 (PubMed:20523938). Interacts with CHD3 (PubMed:28977666). Interacts with CHD4 (PubMed:25593309, PubMed:27616479, PubMed:28977666, PubMed:36064715). Interacts with CHFR (PubMed:19182791). Interacts with CIART (By similarity). Interacts with CDKN1A/p21 (By similarity). Interacts with CDK5 complexed to CDK5R1 (p25) (By similarity). Interacts with CRY1 (By similarity). Interacts with DAXX (PubMed:10669754). Interacts with DDIT3/CHOP (PubMed:17872950). Interacts with DDX5 (PubMed:17369852). Interacts with DHX36; this interaction occurs in a RNA-dependent manner (PubMed:18279852). Interacts with DNMT1 (By similarity). Interacts with DNTTIP1 (PubMed:25653165). Interacts with E4F1 (PubMed:12730668). Interacts with EP300 (PubMed:16762839). Interacts with ERCC6 (PubMed:26030138). Interacts with GATAD2A (PubMed:33283408). Interacts with HCFC1 (PubMed:12670868). Interacts with HDAC9 (PubMed:10487760, PubMed:10655483). Interacts with HUS1 (PubMed:10846170). Interacts with INSM1 (PubMed:16569215). Interacts with KDM4A (PubMed:15927959). Interacts with KDM5A; this interaction impairs histone deacetylation (By similarity). Interacts with KDM5B (PubMed:17373667). Interacts with KLF1 (By similarity). Interacts with MBD3L2 (PubMed:15701600). Interacts with MIER1 (PubMed:12482978). Interacts with NFE4 (PubMed:15273251). Interacts with NR4A2/NURR1 (By similarity). Interacts with NR1D2 (via C-terminus) (PubMed:17996965). Interacts with NRIP1 (PubMed:11006275). Interacts with NSD2 (By similarity). Interacts with PACS2 (PubMed:29656858). Interacts with PHB2 (By similarity). Interacts with PPHLN1 (PubMed:17963697). Interacts with PRDM6 (By similarity). Interacts with PRDM16 (PubMed:19049980). Interacts with PWWP2A in a MTA1-dependent manner (By similarity). Interacts with PWWP2B (By similarity). Interacts with RB1 (PubMed:19081374). Interacts with RERE (By similarity). Interacts with SANBR (via the BTB domain) (By similarity). Interacts with SAMSN1 (By similarity). Interacts with SAP30L (PubMed:16820529). Interacts with SETDB1 (By similarity). Interacts with SIN3A (By similarity). Interacts with SMAD3 (PubMed:19049980). Interacts with SMAD4; positively regulated by ZBTB7A (PubMed:25514493). Interacts with SMARCAD1 (PubMed:21549307). Interacts with SMARCA4/BRG1 (PubMed:19081374). Interacts with SMYD2 (By similarity). Interacts with SMYD4 (via MYND-type zinc finger) (PubMed:30110327). Interacts with SP1; the interaction deacetylates SP1 and regulates its transcriptional activity (PubMed:16478997). Interacts with SP3; the interaction deacetylates SP3 and regulates its transcriptional activity (PubMed:12837748, PubMed:17548428). In vitro, C(18) ceramides increase this interaction and the subsequent SP3 deacetylation and SP3-mediated repression of the TERT promoter (PubMed:12837748, PubMed:17548428). Interacts with SPEN/MINT (PubMed:11331609). Interacts with SPHK2 (PubMed:19729656). Interacts with SUV39H1 (By similarity). Interacts with TGIF (PubMed:11427533). Interacts with TGIF2 (PubMed:11427533). Interacts with TRAF6 (PubMed:18093978). Interacts with TRIM28; the interaction recruits HDAC1 to E2F1 and inhibits its acetylation (PubMed:17704056). Interacts with TSC22D3 isoform 1; this interaction affects HDAC1 activity on MYOG promoter and thus inhibits MYOD1 transcriptional activity (By similarity). Interacts with UHRF1 (PubMed:15361834). Interacts with UHRF2 (PubMed:15361834). Interacts with ZBTB7A (PubMed:25514493). Interacts with ZMYND8 (PubMed:25593309, PubMed:36064715). Interacts with ZMYND15 (By similarity). Interacts with ZNF431 (By similarity). Interacts with ZNF516; this interaction is enhanced in the presence of PWWP2B (By similarity). Interacts with ZNF541 (By similarity). Interacts with ZNF638 (PubMed:30487602). Interacts with ZNHIT1 (By similarity). Interacts with the non-histone region of MACROH2A1 (By similarity). Identified in a complex with HDAC2, KCTD19, DNTTIP1 and ZNF541 (By similarity). Interacts with VRK1 (PubMed:37179361).</text>
</comment>
<comment type="subunit">
    <text evidence="40">(Microbial infection) Interacts with SV40 large T antigen.</text>
</comment>
<comment type="interaction">
    <interactant intactId="EBI-301834">
        <id>Q13547</id>
    </interactant>
    <interactant intactId="EBI-1210388">
        <id>Q14865</id>
        <label>ARID5B</label>
    </interactant>
    <organismsDiffer>false</organismsDiffer>
    <experiments>9</experiments>
</comment>
<comment type="interaction">
    <interactant intactId="EBI-301834">
        <id>Q13547</id>
    </interactant>
    <interactant intactId="EBI-6597578">
        <id>Q9C0K0</id>
        <label>BCL11B</label>
    </interactant>
    <organismsDiffer>false</organismsDiffer>
    <experiments>5</experiments>
</comment>
<comment type="interaction">
    <interactant intactId="EBI-301834">
        <id>Q13547</id>
    </interactant>
    <interactant intactId="EBI-714781">
        <id>Q9HCU9</id>
        <label>BRMS1</label>
    </interactant>
    <organismsDiffer>false</organismsDiffer>
    <experiments>8</experiments>
</comment>
<comment type="interaction">
    <interactant intactId="EBI-301834">
        <id>Q13547</id>
    </interactant>
    <interactant intactId="EBI-6598617">
        <id>Q6PH81</id>
        <label>C16orf87</label>
    </interactant>
    <organismsDiffer>false</organismsDiffer>
    <experiments>8</experiments>
</comment>
<comment type="interaction">
    <interactant intactId="EBI-301834">
        <id>Q13547</id>
    </interactant>
    <interactant intactId="EBI-372916">
        <id>Q14839</id>
        <label>CHD4</label>
    </interactant>
    <organismsDiffer>false</organismsDiffer>
    <experiments>15</experiments>
</comment>
<comment type="interaction">
    <interactant intactId="EBI-301834">
        <id>Q13547</id>
    </interactant>
    <interactant intactId="EBI-347804">
        <id>P68400</id>
        <label>CSNK2A1</label>
    </interactant>
    <organismsDiffer>false</organismsDiffer>
    <experiments>4</experiments>
</comment>
<comment type="interaction">
    <interactant intactId="EBI-301834">
        <id>Q13547</id>
    </interactant>
    <interactant intactId="EBI-77321">
        <id>Q9UER7</id>
        <label>DAXX</label>
    </interactant>
    <organismsDiffer>false</organismsDiffer>
    <experiments>2</experiments>
</comment>
<comment type="interaction">
    <interactant intactId="EBI-301834">
        <id>Q13547</id>
    </interactant>
    <interactant intactId="EBI-5280703">
        <id>Q92841-4</id>
        <label>DDX17</label>
    </interactant>
    <organismsDiffer>false</organismsDiffer>
    <experiments>3</experiments>
</comment>
<comment type="interaction">
    <interactant intactId="EBI-301834">
        <id>Q13547</id>
    </interactant>
    <interactant intactId="EBI-351962">
        <id>P17844</id>
        <label>DDX5</label>
    </interactant>
    <organismsDiffer>false</organismsDiffer>
    <experiments>4</experiments>
</comment>
<comment type="interaction">
    <interactant intactId="EBI-301834">
        <id>Q13547</id>
    </interactant>
    <interactant intactId="EBI-740967">
        <id>Q9UJW3</id>
        <label>DNMT3L</label>
    </interactant>
    <organismsDiffer>false</organismsDiffer>
    <experiments>3</experiments>
</comment>
<comment type="interaction">
    <interactant intactId="EBI-301834">
        <id>Q13547</id>
    </interactant>
    <interactant intactId="EBI-448924">
        <id>Q01094</id>
        <label>E2F1</label>
    </interactant>
    <organismsDiffer>false</organismsDiffer>
    <experiments>2</experiments>
</comment>
<comment type="interaction">
    <interactant intactId="EBI-301834">
        <id>Q13547</id>
    </interactant>
    <interactant intactId="EBI-1227043">
        <id>Q66K89</id>
        <label>E4F1</label>
    </interactant>
    <organismsDiffer>false</organismsDiffer>
    <experiments>3</experiments>
</comment>
<comment type="interaction">
    <interactant intactId="EBI-301834">
        <id>Q13547</id>
    </interactant>
    <interactant intactId="EBI-744366">
        <id>Q96KQ7</id>
        <label>EHMT2</label>
    </interactant>
    <organismsDiffer>false</organismsDiffer>
    <experiments>9</experiments>
</comment>
<comment type="interaction">
    <interactant intactId="EBI-301834">
        <id>Q13547</id>
    </interactant>
    <interactant intactId="EBI-724968">
        <id>Q96D98</id>
        <label>EID2B</label>
    </interactant>
    <organismsDiffer>false</organismsDiffer>
    <experiments>2</experiments>
</comment>
<comment type="interaction">
    <interactant intactId="EBI-301834">
        <id>Q13547</id>
    </interactant>
    <interactant intactId="EBI-949368">
        <id>Q99684</id>
        <label>GFI1</label>
    </interactant>
    <organismsDiffer>false</organismsDiffer>
    <experiments>4</experiments>
</comment>
<comment type="interaction">
    <interactant intactId="EBI-301834">
        <id>Q13547</id>
    </interactant>
    <interactant intactId="EBI-713355">
        <id>Q13227</id>
        <label>GPS2</label>
    </interactant>
    <organismsDiffer>false</organismsDiffer>
    <experiments>2</experiments>
</comment>
<comment type="interaction">
    <interactant intactId="EBI-301834">
        <id>Q13547</id>
    </interactant>
    <interactant intactId="EBI-302023">
        <id>P62805</id>
        <label>H4C9</label>
    </interactant>
    <organismsDiffer>false</organismsDiffer>
    <experiments>3</experiments>
</comment>
<comment type="interaction">
    <interactant intactId="EBI-301834">
        <id>Q13547</id>
    </interactant>
    <interactant intactId="EBI-396176">
        <id>P51610</id>
        <label>HCFC1</label>
    </interactant>
    <organismsDiffer>false</organismsDiffer>
    <experiments>2</experiments>
</comment>
<comment type="interaction">
    <interactant intactId="EBI-301834">
        <id>Q13547</id>
    </interactant>
    <interactant intactId="EBI-301821">
        <id>Q92769</id>
        <label>HDAC2</label>
    </interactant>
    <organismsDiffer>false</organismsDiffer>
    <experiments>21</experiments>
</comment>
<comment type="interaction">
    <interactant intactId="EBI-301834">
        <id>Q13547</id>
    </interactant>
    <interactant intactId="EBI-607682">
        <id>O15379</id>
        <label>HDAC3</label>
    </interactant>
    <organismsDiffer>false</organismsDiffer>
    <experiments>2</experiments>
</comment>
<comment type="interaction">
    <interactant intactId="EBI-301834">
        <id>Q13547</id>
    </interactant>
    <interactant intactId="EBI-740978">
        <id>P43355</id>
        <label>MAGEA1</label>
    </interactant>
    <organismsDiffer>false</organismsDiffer>
    <experiments>2</experiments>
</comment>
<comment type="interaction">
    <interactant intactId="EBI-301834">
        <id>Q13547</id>
    </interactant>
    <interactant intactId="EBI-867196">
        <id>Q9UIS9</id>
        <label>MBD1</label>
    </interactant>
    <organismsDiffer>false</organismsDiffer>
    <experiments>2</experiments>
</comment>
<comment type="interaction">
    <interactant intactId="EBI-301834">
        <id>Q13547</id>
    </interactant>
    <interactant intactId="EBI-1783068">
        <id>O95983</id>
        <label>MBD3</label>
    </interactant>
    <organismsDiffer>false</organismsDiffer>
    <experiments>10</experiments>
</comment>
<comment type="interaction">
    <interactant intactId="EBI-301834">
        <id>Q13547</id>
    </interactant>
    <interactant intactId="EBI-3504940">
        <id>Q8N108</id>
        <label>MIER1</label>
    </interactant>
    <organismsDiffer>false</organismsDiffer>
    <experiments>12</experiments>
</comment>
<comment type="interaction">
    <interactant intactId="EBI-301834">
        <id>Q13547</id>
    </interactant>
    <interactant intactId="EBI-714236">
        <id>Q13330</id>
        <label>MTA1</label>
    </interactant>
    <organismsDiffer>false</organismsDiffer>
    <experiments>16</experiments>
</comment>
<comment type="interaction">
    <interactant intactId="EBI-301834">
        <id>Q13547</id>
    </interactant>
    <interactant intactId="EBI-1783035">
        <id>O94776</id>
        <label>MTA2</label>
    </interactant>
    <organismsDiffer>false</organismsDiffer>
    <experiments>18</experiments>
</comment>
<comment type="interaction">
    <interactant intactId="EBI-301834">
        <id>Q13547</id>
    </interactant>
    <interactant intactId="EBI-80830">
        <id>Q9Y618</id>
        <label>NCOR2</label>
    </interactant>
    <organismsDiffer>false</organismsDiffer>
    <experiments>2</experiments>
</comment>
<comment type="interaction">
    <interactant intactId="EBI-301834">
        <id>Q13547</id>
    </interactant>
    <interactant intactId="EBI-300010">
        <id>P19838</id>
        <label>NFKB1</label>
    </interactant>
    <organismsDiffer>false</organismsDiffer>
    <experiments>5</experiments>
</comment>
<comment type="interaction">
    <interactant intactId="EBI-301834">
        <id>Q13547</id>
    </interactant>
    <interactant intactId="EBI-78579">
        <id>P06748</id>
        <label>NPM1</label>
    </interactant>
    <organismsDiffer>false</organismsDiffer>
    <experiments>2</experiments>
</comment>
<comment type="interaction">
    <interactant intactId="EBI-301834">
        <id>Q13547</id>
    </interactant>
    <interactant intactId="EBI-3910729">
        <id>Q15466</id>
        <label>NR0B2</label>
    </interactant>
    <organismsDiffer>false</organismsDiffer>
    <experiments>2</experiments>
</comment>
<comment type="interaction">
    <interactant intactId="EBI-301834">
        <id>Q13547</id>
    </interactant>
    <interactant intactId="EBI-4292031">
        <id>Q9NQX1</id>
        <label>PRDM5</label>
    </interactant>
    <organismsDiffer>false</organismsDiffer>
    <experiments>3</experiments>
</comment>
<comment type="interaction">
    <interactant intactId="EBI-301834">
        <id>Q13547</id>
    </interactant>
    <interactant intactId="EBI-6597774">
        <id>Q96N64</id>
        <label>PWWP2A</label>
    </interactant>
    <organismsDiffer>false</organismsDiffer>
    <experiments>8</experiments>
</comment>
<comment type="interaction">
    <interactant intactId="EBI-301834">
        <id>Q13547</id>
    </interactant>
    <interactant intactId="EBI-491274">
        <id>P06400</id>
        <label>RB1</label>
    </interactant>
    <organismsDiffer>false</organismsDiffer>
    <experiments>16</experiments>
</comment>
<comment type="interaction">
    <interactant intactId="EBI-301834">
        <id>Q13547</id>
    </interactant>
    <interactant intactId="EBI-620823">
        <id>Q09028</id>
        <label>RBBP4</label>
    </interactant>
    <organismsDiffer>false</organismsDiffer>
    <experiments>14</experiments>
</comment>
<comment type="interaction">
    <interactant intactId="EBI-301834">
        <id>Q13547</id>
    </interactant>
    <interactant intactId="EBI-352227">
        <id>Q16576</id>
        <label>RBBP7</label>
    </interactant>
    <organismsDiffer>false</organismsDiffer>
    <experiments>12</experiments>
</comment>
<comment type="interaction">
    <interactant intactId="EBI-301834">
        <id>Q13547</id>
    </interactant>
    <interactant intactId="EBI-926563">
        <id>Q9UKL0</id>
        <label>RCOR1</label>
    </interactant>
    <organismsDiffer>false</organismsDiffer>
    <experiments>15</experiments>
</comment>
<comment type="interaction">
    <interactant intactId="EBI-301834">
        <id>Q13547</id>
    </interactant>
    <interactant intactId="EBI-73886">
        <id>Q04206</id>
        <label>RELA</label>
    </interactant>
    <organismsDiffer>false</organismsDiffer>
    <experiments>6</experiments>
</comment>
<comment type="interaction">
    <interactant intactId="EBI-301834">
        <id>Q13547</id>
    </interactant>
    <interactant intactId="EBI-1044156">
        <id>O00422</id>
        <label>SAP18</label>
    </interactant>
    <organismsDiffer>false</organismsDiffer>
    <experiments>2</experiments>
</comment>
<comment type="interaction">
    <interactant intactId="EBI-301834">
        <id>Q13547</id>
    </interactant>
    <interactant intactId="EBI-347218">
        <id>Q96ST3</id>
        <label>SIN3A</label>
    </interactant>
    <organismsDiffer>false</organismsDiffer>
    <experiments>13</experiments>
</comment>
<comment type="interaction">
    <interactant intactId="EBI-301834">
        <id>Q13547</id>
    </interactant>
    <interactant intactId="EBI-741906">
        <id>Q9NP50</id>
        <label>SINHCAF</label>
    </interactant>
    <organismsDiffer>false</organismsDiffer>
    <experiments>10</experiments>
</comment>
<comment type="interaction">
    <interactant intactId="EBI-301834">
        <id>Q13547</id>
    </interactant>
    <interactant intactId="EBI-1045459">
        <id>O95863</id>
        <label>SNAI1</label>
    </interactant>
    <organismsDiffer>false</organismsDiffer>
    <experiments>3</experiments>
</comment>
<comment type="interaction">
    <interactant intactId="EBI-301834">
        <id>Q13547</id>
    </interactant>
    <interactant intactId="EBI-298336">
        <id>P08047</id>
        <label>SP1</label>
    </interactant>
    <organismsDiffer>false</organismsDiffer>
    <experiments>2</experiments>
</comment>
<comment type="interaction">
    <interactant intactId="EBI-301834">
        <id>Q13547</id>
    </interactant>
    <interactant intactId="EBI-349968">
        <id>O43463</id>
        <label>SUV39H1</label>
    </interactant>
    <organismsDiffer>false</organismsDiffer>
    <experiments>3</experiments>
</comment>
<comment type="interaction">
    <interactant intactId="EBI-301834">
        <id>Q13547</id>
    </interactant>
    <interactant intactId="EBI-366083">
        <id>P04637</id>
        <label>TP53</label>
    </interactant>
    <organismsDiffer>false</organismsDiffer>
    <experiments>7</experiments>
</comment>
<comment type="interaction">
    <interactant intactId="EBI-301834">
        <id>Q13547</id>
    </interactant>
    <interactant intactId="EBI-711925">
        <id>Q05516</id>
        <label>ZBTB16</label>
    </interactant>
    <organismsDiffer>false</organismsDiffer>
    <experiments>6</experiments>
</comment>
<comment type="interaction">
    <interactant intactId="EBI-301834">
        <id>Q13547</id>
    </interactant>
    <interactant intactId="EBI-2795384">
        <id>O95365</id>
        <label>ZBTB7A</label>
    </interactant>
    <organismsDiffer>false</organismsDiffer>
    <experiments>2</experiments>
</comment>
<comment type="interaction">
    <interactant intactId="EBI-301834">
        <id>Q13547</id>
    </interactant>
    <interactant intactId="EBI-2799490">
        <id>Q92618</id>
        <label>ZNF516</label>
    </interactant>
    <organismsDiffer>false</organismsDiffer>
    <experiments>12</experiments>
</comment>
<comment type="interaction">
    <interactant intactId="EBI-301834">
        <id>Q13547</id>
    </interactant>
    <interactant intactId="EBI-11292028">
        <id>P29128</id>
        <label>BICP0</label>
    </interactant>
    <organismsDiffer>true</organismsDiffer>
    <experiments>2</experiments>
</comment>
<comment type="subcellular location">
    <subcellularLocation>
        <location evidence="9 59 70 74">Nucleus</location>
    </subcellularLocation>
</comment>
<comment type="tissue specificity">
    <text>Ubiquitous, with higher levels in heart, pancreas and testis, and lower levels in kidney and brain.</text>
</comment>
<comment type="PTM">
    <text evidence="17 18 26">Sumoylated on Lys-444 and Lys-476; which promotes enzymatic activity. Desumoylated by SENP1.</text>
</comment>
<comment type="PTM">
    <text evidence="16">Phosphorylation on Ser-421 and Ser-423 promotes enzymatic activity and interactions with NuRD and SIN3 complexes. Phosphorylated by CDK5.</text>
</comment>
<comment type="PTM">
    <text evidence="54 58">Ubiquitinated by CHFR, leading to its degradation by the proteasome. Ubiquitinated by KCTD11, leading to proteasomal degradation.</text>
</comment>
<comment type="similarity">
    <text evidence="80">Belongs to the histone deacetylase family. HD type 1 subfamily.</text>
</comment>
<proteinExistence type="evidence at protein level"/>
<organism>
    <name type="scientific">Homo sapiens</name>
    <name type="common">Human</name>
    <dbReference type="NCBI Taxonomy" id="9606"/>
    <lineage>
        <taxon>Eukaryota</taxon>
        <taxon>Metazoa</taxon>
        <taxon>Chordata</taxon>
        <taxon>Craniata</taxon>
        <taxon>Vertebrata</taxon>
        <taxon>Euteleostomi</taxon>
        <taxon>Mammalia</taxon>
        <taxon>Eutheria</taxon>
        <taxon>Euarchontoglires</taxon>
        <taxon>Primates</taxon>
        <taxon>Haplorrhini</taxon>
        <taxon>Catarrhini</taxon>
        <taxon>Hominidae</taxon>
        <taxon>Homo</taxon>
    </lineage>
</organism>
<evidence type="ECO:0000250" key="1">
    <source>
        <dbReference type="UniProtKB" id="O09106"/>
    </source>
</evidence>
<evidence type="ECO:0000250" key="2">
    <source>
        <dbReference type="UniProtKB" id="O15379"/>
    </source>
</evidence>
<evidence type="ECO:0000250" key="3">
    <source>
        <dbReference type="UniProtKB" id="P70288"/>
    </source>
</evidence>
<evidence type="ECO:0000250" key="4">
    <source>
        <dbReference type="UniProtKB" id="Q92769"/>
    </source>
</evidence>
<evidence type="ECO:0000256" key="5">
    <source>
        <dbReference type="SAM" id="MobiDB-lite"/>
    </source>
</evidence>
<evidence type="ECO:0000269" key="6">
    <source>
    </source>
</evidence>
<evidence type="ECO:0000269" key="7">
    <source>
    </source>
</evidence>
<evidence type="ECO:0000269" key="8">
    <source>
    </source>
</evidence>
<evidence type="ECO:0000269" key="9">
    <source>
    </source>
</evidence>
<evidence type="ECO:0000269" key="10">
    <source>
    </source>
</evidence>
<evidence type="ECO:0000269" key="11">
    <source>
    </source>
</evidence>
<evidence type="ECO:0000269" key="12">
    <source>
    </source>
</evidence>
<evidence type="ECO:0000269" key="13">
    <source>
    </source>
</evidence>
<evidence type="ECO:0000269" key="14">
    <source>
    </source>
</evidence>
<evidence type="ECO:0000269" key="15">
    <source>
    </source>
</evidence>
<evidence type="ECO:0000269" key="16">
    <source>
    </source>
</evidence>
<evidence type="ECO:0000269" key="17">
    <source>
    </source>
</evidence>
<evidence type="ECO:0000269" key="18">
    <source>
    </source>
</evidence>
<evidence type="ECO:0000269" key="19">
    <source>
    </source>
</evidence>
<evidence type="ECO:0000269" key="20">
    <source>
    </source>
</evidence>
<evidence type="ECO:0000269" key="21">
    <source>
    </source>
</evidence>
<evidence type="ECO:0000269" key="22">
    <source>
    </source>
</evidence>
<evidence type="ECO:0000269" key="23">
    <source>
    </source>
</evidence>
<evidence type="ECO:0000269" key="24">
    <source>
    </source>
</evidence>
<evidence type="ECO:0000269" key="25">
    <source>
    </source>
</evidence>
<evidence type="ECO:0000269" key="26">
    <source>
    </source>
</evidence>
<evidence type="ECO:0000269" key="27">
    <source>
    </source>
</evidence>
<evidence type="ECO:0000269" key="28">
    <source>
    </source>
</evidence>
<evidence type="ECO:0000269" key="29">
    <source>
    </source>
</evidence>
<evidence type="ECO:0000269" key="30">
    <source>
    </source>
</evidence>
<evidence type="ECO:0000269" key="31">
    <source>
    </source>
</evidence>
<evidence type="ECO:0000269" key="32">
    <source>
    </source>
</evidence>
<evidence type="ECO:0000269" key="33">
    <source>
    </source>
</evidence>
<evidence type="ECO:0000269" key="34">
    <source>
    </source>
</evidence>
<evidence type="ECO:0000269" key="35">
    <source>
    </source>
</evidence>
<evidence type="ECO:0000269" key="36">
    <source>
    </source>
</evidence>
<evidence type="ECO:0000269" key="37">
    <source>
    </source>
</evidence>
<evidence type="ECO:0000269" key="38">
    <source>
    </source>
</evidence>
<evidence type="ECO:0000269" key="39">
    <source>
    </source>
</evidence>
<evidence type="ECO:0000269" key="40">
    <source>
    </source>
</evidence>
<evidence type="ECO:0000269" key="41">
    <source>
    </source>
</evidence>
<evidence type="ECO:0000269" key="42">
    <source>
    </source>
</evidence>
<evidence type="ECO:0000269" key="43">
    <source>
    </source>
</evidence>
<evidence type="ECO:0000269" key="44">
    <source>
    </source>
</evidence>
<evidence type="ECO:0000269" key="45">
    <source>
    </source>
</evidence>
<evidence type="ECO:0000269" key="46">
    <source>
    </source>
</evidence>
<evidence type="ECO:0000269" key="47">
    <source>
    </source>
</evidence>
<evidence type="ECO:0000269" key="48">
    <source>
    </source>
</evidence>
<evidence type="ECO:0000269" key="49">
    <source>
    </source>
</evidence>
<evidence type="ECO:0000269" key="50">
    <source>
    </source>
</evidence>
<evidence type="ECO:0000269" key="51">
    <source>
    </source>
</evidence>
<evidence type="ECO:0000269" key="52">
    <source>
    </source>
</evidence>
<evidence type="ECO:0000269" key="53">
    <source>
    </source>
</evidence>
<evidence type="ECO:0000269" key="54">
    <source>
    </source>
</evidence>
<evidence type="ECO:0000269" key="55">
    <source>
    </source>
</evidence>
<evidence type="ECO:0000269" key="56">
    <source>
    </source>
</evidence>
<evidence type="ECO:0000269" key="57">
    <source>
    </source>
</evidence>
<evidence type="ECO:0000269" key="58">
    <source>
    </source>
</evidence>
<evidence type="ECO:0000269" key="59">
    <source>
    </source>
</evidence>
<evidence type="ECO:0000269" key="60">
    <source>
    </source>
</evidence>
<evidence type="ECO:0000269" key="61">
    <source>
    </source>
</evidence>
<evidence type="ECO:0000269" key="62">
    <source>
    </source>
</evidence>
<evidence type="ECO:0000269" key="63">
    <source>
    </source>
</evidence>
<evidence type="ECO:0000269" key="64">
    <source>
    </source>
</evidence>
<evidence type="ECO:0000269" key="65">
    <source>
    </source>
</evidence>
<evidence type="ECO:0000269" key="66">
    <source>
    </source>
</evidence>
<evidence type="ECO:0000269" key="67">
    <source>
    </source>
</evidence>
<evidence type="ECO:0000269" key="68">
    <source>
    </source>
</evidence>
<evidence type="ECO:0000269" key="69">
    <source>
    </source>
</evidence>
<evidence type="ECO:0000269" key="70">
    <source>
    </source>
</evidence>
<evidence type="ECO:0000269" key="71">
    <source>
    </source>
</evidence>
<evidence type="ECO:0000269" key="72">
    <source>
    </source>
</evidence>
<evidence type="ECO:0000269" key="73">
    <source>
    </source>
</evidence>
<evidence type="ECO:0000269" key="74">
    <source>
    </source>
</evidence>
<evidence type="ECO:0000269" key="75">
    <source>
    </source>
</evidence>
<evidence type="ECO:0000269" key="76">
    <source>
    </source>
</evidence>
<evidence type="ECO:0000269" key="77">
    <source>
    </source>
</evidence>
<evidence type="ECO:0000303" key="78">
    <source>
    </source>
</evidence>
<evidence type="ECO:0000303" key="79">
    <source>
    </source>
</evidence>
<evidence type="ECO:0000305" key="80"/>
<evidence type="ECO:0000305" key="81">
    <source>
    </source>
</evidence>
<evidence type="ECO:0000305" key="82">
    <source>
    </source>
</evidence>
<evidence type="ECO:0000305" key="83">
    <source>
    </source>
</evidence>
<evidence type="ECO:0000312" key="84">
    <source>
        <dbReference type="HGNC" id="HGNC:4852"/>
    </source>
</evidence>
<evidence type="ECO:0007744" key="85">
    <source>
    </source>
</evidence>
<evidence type="ECO:0007744" key="86">
    <source>
    </source>
</evidence>
<evidence type="ECO:0007744" key="87">
    <source>
    </source>
</evidence>
<evidence type="ECO:0007744" key="88">
    <source>
    </source>
</evidence>
<evidence type="ECO:0007744" key="89">
    <source>
    </source>
</evidence>
<evidence type="ECO:0007744" key="90">
    <source>
    </source>
</evidence>
<evidence type="ECO:0007744" key="91">
    <source>
    </source>
</evidence>
<evidence type="ECO:0007744" key="92">
    <source>
    </source>
</evidence>
<evidence type="ECO:0007744" key="93">
    <source>
    </source>
</evidence>
<evidence type="ECO:0007744" key="94">
    <source>
    </source>
</evidence>
<evidence type="ECO:0007744" key="95">
    <source>
    </source>
</evidence>
<evidence type="ECO:0007744" key="96">
    <source>
    </source>
</evidence>
<evidence type="ECO:0007744" key="97">
    <source>
    </source>
</evidence>
<evidence type="ECO:0007744" key="98">
    <source>
    </source>
</evidence>
<evidence type="ECO:0007829" key="99">
    <source>
        <dbReference type="PDB" id="4BKX"/>
    </source>
</evidence>
<evidence type="ECO:0007829" key="100">
    <source>
        <dbReference type="PDB" id="5ICN"/>
    </source>
</evidence>
<evidence type="ECO:0007829" key="101">
    <source>
        <dbReference type="PDB" id="8VRT"/>
    </source>
</evidence>
<accession>Q13547</accession>
<accession>Q92534</accession>
<name>HDAC1_HUMAN</name>